<comment type="function">
    <molecule>Isoform Replicase polyprotein 1ab</molecule>
    <text evidence="31">Multifunctional protein involved in the transcription and replication of viral RNAs. Contains the proteinases responsible for the cleavages of the polyprotein.</text>
</comment>
<comment type="function">
    <molecule>Non-structural protein 2</molecule>
    <text evidence="2">May play a role in the modulation of host cell survival signaling pathway by interacting with host PHB and PHB2 (By similarity). Indeed, these two proteins play a role in maintaining the functional integrity of the mitochondria and protecting cells from various stresses (By similarity).</text>
</comment>
<comment type="function">
    <molecule>Papain-like protease</molecule>
    <text evidence="2">Responsible for the cleavages located at the N-terminus of the replicase polyprotein (By similarity). In addition, PL-PRO possesses a deubiquitinating/deISGylating activity and processes both 'Lys-48'- and 'Lys-63'-linked polyubiquitin chains from cellular substrates (By similarity).</text>
</comment>
<comment type="function">
    <molecule>Non-structural protein 4</molecule>
    <text evidence="30">Plays a role in host membrane rearrangement that leads to creation of cytoplasmic double-membrane vesicles (DMV) necessary for viral replication (PubMed:30200673). Alone is able to induce paired membranes (PubMed:30200673). Coexpression of nsp3 and nsp4 does not result in the formation of DMVs (PubMed:30200673).</text>
</comment>
<comment type="function">
    <molecule>3C-like proteinase</molecule>
    <text evidence="10">Responsible for the majority of cleavages as it cleaves the C-terminus of replicase polyprotein at 11 sites. Recognizes substrates containing the core sequence [ILMVF]-Q-|-[SGACN]. Inhibited by the substrate-analog Cbz-Val-Asn-Ser-Thr-Leu-Gln-CMK.</text>
</comment>
<comment type="function">
    <molecule>Non-structural protein 7</molecule>
    <text evidence="2">Forms a hexadecamer with nsp8 (8 subunits of each) that may participate in viral replication by acting as a primase. Alternatively, may synthesize substantially longer products than oligonucleotide primers.</text>
</comment>
<comment type="function">
    <molecule>Non-structural protein 8</molecule>
    <text evidence="2">Forms a hexadecamer with nsp7 (8 subunits of each) that may participate in viral replication by acting as a primase. Alternatively, may synthesize substantially longer products than oligonucleotide primers.</text>
</comment>
<comment type="function">
    <molecule>Viral protein genome-linked nsp9</molecule>
    <text evidence="4 29">Forms a primer, NSP9-pU, which is utilized by the polymerase for the initiation of RNA chains. Interacts with ribosome signal recognition particle RNA (SRP). Together with NSP8, suppress protein integration into the cell membrane, thereby disrupting host immune defenses.</text>
</comment>
<comment type="function">
    <molecule>Non-structural protein 10</molecule>
    <text evidence="2">Plays a pivotal role in viral transcription by stimulating both nsp14 3'-5' exoribonuclease and nsp16 2'-O-methyltransferase activities (By similarity). Therefore plays an essential role in viral mRNAs cap methylation (By similarity).</text>
</comment>
<comment type="function">
    <molecule>RNA-directed RNA polymerase nsp12</molecule>
    <text evidence="4">RNA-directed RNA polymerase that catalyzes the transcription of viral genomic and subgenomic RNAs. Acts in complex with nsp7 and nsp8 to transcribe both the minus and positive strands of genomic RNA. The kinase-like NiRAN domain of NSP12 attaches one or more nucleotides to the amino terminus of NSP9, forming a covalent RNA-protein intermediate that serves as transcription/replication primer. Subgenomic RNAs (sgRNAs) are formed by discontinuous transcription: The polymerase has the ability to pause at transcription-regulating sequences (TRS) and jump to the leader TRS, resulting in a major deletion. This creates a series of subgenomic RNAs that are replicated, transcribed and translated. In addition, Nsp12 is a subunit of the viral RNA capping enzyme that catalyzes the RNA guanylyltransferase reaction for genomic and sub-genomic RNAs. Subsequently, the NiRAN domain transfers RNA to GDP, and forms the core cap structure GpppA-RNA.</text>
</comment>
<comment type="function">
    <molecule>Helicase</molecule>
    <text evidence="2">Multi-functional protein with a zinc-binding domain in N-terminus displaying RNA and DNA duplex-unwinding activities with 5' to 3' polarity. Activity of helicase is dependent on magnesium.</text>
</comment>
<comment type="function">
    <molecule>Proofreading exoribonuclease</molecule>
    <text evidence="2">Enzyme possessing two different activities: an exoribonuclease activity acting on both ssRNA and dsRNA in a 3' to 5' direction and a N7-guanine methyltransferase activity (By similarity). Acts as a proofreading exoribonuclease for RNA replication, thereby lowering The sensitivity of the virus to RNA mutagens (By similarity).</text>
</comment>
<comment type="function">
    <molecule>Uridylate-specific endoribonuclease</molecule>
    <text evidence="2">Plays a role in viral transcription/replication and prevents the simultaneous activation of host cell dsRNA sensors, such as MDA5/IFIH1, OAS, and PKR (By similarity). Acts by degrading the 5'-polyuridines generated during replication of the poly(A) region of viral genomic and subgenomic RNAs (By similarity). Catalyzes a two-step reaction in which a 2'3'-cyclic phosphate (2'3'-cP) is first generated by 2'-O transesterification, which is then hydrolyzed to a 3'-phosphate (3'-P) (By similarity). If not degraded, poly(U) RNA would hybridize with poly(A) RNA tails and activate host dsRNA sensors (By similarity).</text>
</comment>
<comment type="function">
    <molecule>2'-O-methyl transferase</molecule>
    <text evidence="2">Methyltransferase that mediates mRNA cap 2'-O-ribose methylation to the 5'-cap structure of viral mRNAs. N7-methyl guanosine cap is a prerequisite for binding of nsp16. Therefore plays an essential role in viral mRNAs cap methylation which is essential to evade immune system.</text>
</comment>
<comment type="catalytic activity">
    <molecule>Papain-like protease</molecule>
    <reaction evidence="3">
        <text>Thiol-dependent hydrolysis of ester, thioester, amide, peptide and isopeptide bonds formed by the C-terminal Gly of ubiquitin (a 76-residue protein attached to proteins as an intracellular targeting signal).</text>
        <dbReference type="EC" id="3.4.19.12"/>
    </reaction>
</comment>
<comment type="catalytic activity">
    <molecule>RNA-directed RNA polymerase nsp12</molecule>
    <reaction evidence="9">
        <text>RNA(n) + a ribonucleoside 5'-triphosphate = RNA(n+1) + diphosphate</text>
        <dbReference type="Rhea" id="RHEA:21248"/>
        <dbReference type="Rhea" id="RHEA-COMP:14527"/>
        <dbReference type="Rhea" id="RHEA-COMP:17342"/>
        <dbReference type="ChEBI" id="CHEBI:33019"/>
        <dbReference type="ChEBI" id="CHEBI:61557"/>
        <dbReference type="ChEBI" id="CHEBI:140395"/>
        <dbReference type="EC" id="2.7.7.48"/>
    </reaction>
</comment>
<comment type="catalytic activity">
    <molecule>Helicase</molecule>
    <reaction evidence="2">
        <text>ATP + H2O = ADP + phosphate + H(+)</text>
        <dbReference type="Rhea" id="RHEA:13065"/>
        <dbReference type="ChEBI" id="CHEBI:15377"/>
        <dbReference type="ChEBI" id="CHEBI:15378"/>
        <dbReference type="ChEBI" id="CHEBI:30616"/>
        <dbReference type="ChEBI" id="CHEBI:43474"/>
        <dbReference type="ChEBI" id="CHEBI:456216"/>
        <dbReference type="EC" id="3.6.4.12"/>
    </reaction>
</comment>
<comment type="catalytic activity">
    <molecule>RNA-directed RNA polymerase nsp12</molecule>
    <reaction evidence="4">
        <text>a 5'-end diphospho-ribonucleoside in mRNA + GTP + H(+) = a 5'-end (5'-triphosphoguanosine)-ribonucleoside in mRNA + diphosphate</text>
        <dbReference type="Rhea" id="RHEA:67012"/>
        <dbReference type="Rhea" id="RHEA-COMP:17165"/>
        <dbReference type="Rhea" id="RHEA-COMP:17166"/>
        <dbReference type="ChEBI" id="CHEBI:15378"/>
        <dbReference type="ChEBI" id="CHEBI:33019"/>
        <dbReference type="ChEBI" id="CHEBI:37565"/>
        <dbReference type="ChEBI" id="CHEBI:167616"/>
        <dbReference type="ChEBI" id="CHEBI:167617"/>
        <dbReference type="EC" id="2.7.7.50"/>
    </reaction>
    <physiologicalReaction direction="left-to-right" evidence="4">
        <dbReference type="Rhea" id="RHEA:67013"/>
    </physiologicalReaction>
</comment>
<comment type="catalytic activity">
    <molecule>Helicase</molecule>
    <reaction evidence="2">
        <text>ATP + H2O = ADP + phosphate + H(+)</text>
        <dbReference type="Rhea" id="RHEA:13065"/>
        <dbReference type="ChEBI" id="CHEBI:15377"/>
        <dbReference type="ChEBI" id="CHEBI:15378"/>
        <dbReference type="ChEBI" id="CHEBI:30616"/>
        <dbReference type="ChEBI" id="CHEBI:43474"/>
        <dbReference type="ChEBI" id="CHEBI:456216"/>
        <dbReference type="EC" id="3.6.4.13"/>
    </reaction>
</comment>
<comment type="catalytic activity">
    <molecule>Uridylate-specific endoribonuclease</molecule>
    <reaction evidence="2">
        <text>uridylyl-uridylyl-ribonucleotide-RNA = a 3'-end uridylyl-2',3'-cyclophospho-uridine-RNA + a 5'-end dephospho-ribonucleoside-RNA</text>
        <dbReference type="Rhea" id="RHEA:67732"/>
        <dbReference type="Rhea" id="RHEA-COMP:13936"/>
        <dbReference type="Rhea" id="RHEA-COMP:17334"/>
        <dbReference type="Rhea" id="RHEA-COMP:17335"/>
        <dbReference type="ChEBI" id="CHEBI:138284"/>
        <dbReference type="ChEBI" id="CHEBI:173079"/>
        <dbReference type="ChEBI" id="CHEBI:173080"/>
    </reaction>
</comment>
<comment type="catalytic activity">
    <molecule>2'-O-methyl transferase</molecule>
    <reaction evidence="2">
        <text>a 5'-end (N(7)-methyl 5'-triphosphoguanosine)-ribonucleoside in mRNA + S-adenosyl-L-methionine = a 5'-end (N(7)-methyl 5'-triphosphoguanosine)-(2'-O-methyl-ribonucleoside) in mRNA + S-adenosyl-L-homocysteine + H(+)</text>
        <dbReference type="Rhea" id="RHEA:67020"/>
        <dbReference type="Rhea" id="RHEA-COMP:17167"/>
        <dbReference type="Rhea" id="RHEA-COMP:17168"/>
        <dbReference type="ChEBI" id="CHEBI:15378"/>
        <dbReference type="ChEBI" id="CHEBI:57856"/>
        <dbReference type="ChEBI" id="CHEBI:59789"/>
        <dbReference type="ChEBI" id="CHEBI:156461"/>
        <dbReference type="ChEBI" id="CHEBI:167609"/>
        <dbReference type="EC" id="2.1.1.57"/>
    </reaction>
</comment>
<comment type="cofactor">
    <molecule>Uridylate-specific endoribonuclease</molecule>
    <cofactor evidence="2">
        <name>Mn(2+)</name>
        <dbReference type="ChEBI" id="CHEBI:29035"/>
    </cofactor>
    <text evidence="2">Likely affects Nsp15 binding to RNA.</text>
</comment>
<comment type="cofactor">
    <molecule>Papain-like protease</molecule>
    <cofactor evidence="2">
        <name>Zn(2+)</name>
        <dbReference type="ChEBI" id="CHEBI:29105"/>
    </cofactor>
</comment>
<comment type="subunit">
    <molecule>Non-structural protein 2</molecule>
    <text evidence="2">Interacts with host PHB and PHB2.</text>
</comment>
<comment type="subunit">
    <molecule>Non-structural protein 4</molecule>
    <text evidence="2">Interacts with papain-like protease and non-structural protein 6.</text>
</comment>
<comment type="subunit">
    <molecule>3C-like proteinase</molecule>
    <text evidence="2 28">Monomer (PubMed:18094151). Homodimer (PubMed:18094151). Only the homodimer shows catalytic activity (By similarity).</text>
</comment>
<comment type="subunit">
    <molecule>Non-structural protein 7</molecule>
    <text evidence="2">Eight copies of nsp7 and eight copies of nsp8 assemble to form a heterohexadecamer dsRNA-encircling ring structure.</text>
</comment>
<comment type="subunit">
    <molecule>Non-structural protein 8</molecule>
    <text evidence="2">Eight copies of nsp7 and eight copies of nsp8 assemble to form a heterohexadecamer dsRNA-encircling ring structure (By similarity). Interacts with ORF6 protein (By similarity).</text>
</comment>
<comment type="subunit">
    <molecule>Viral protein genome-linked nsp9</molecule>
    <text evidence="29">Homodimer.</text>
</comment>
<comment type="subunit">
    <molecule>Non-structural protein 10</molecule>
    <text evidence="2">Homododecamer (By similarity). Interacts with proofreading exoribonuclease nsp14 and 2'-O-methyltransferase nsp16; these interactions enhance nsp14 and nsp16 enzymatic activities (By similarity).</text>
</comment>
<comment type="subunit">
    <molecule>Proofreading exoribonuclease</molecule>
    <text evidence="3">Interacts with host DDX1 (via C-terminus) (By similarity). Interacts with non-structural protein 10 (By similarity).</text>
</comment>
<comment type="subunit">
    <molecule>Uridylate-specific endoribonuclease</molecule>
    <text evidence="2">Homohexamer.</text>
</comment>
<comment type="subunit">
    <molecule>2'-O-methyl transferase</molecule>
    <text evidence="2">Interacts with non-structural protein 10.</text>
</comment>
<comment type="subcellular location">
    <molecule>Papain-like protease</molecule>
    <subcellularLocation>
        <location evidence="32">Host endoplasmic reticulum membrane</location>
        <topology evidence="31">Multi-pass membrane protein</topology>
    </subcellularLocation>
    <subcellularLocation>
        <location evidence="2">Host cytoplasm</location>
    </subcellularLocation>
    <text evidence="32">Gammacoronaviruses induce membrane zippering to form zippered endoplasmic reticulum (zER).</text>
</comment>
<comment type="subcellular location">
    <molecule>Non-structural protein 4</molecule>
    <subcellularLocation>
        <location evidence="32">Host endoplasmic reticulum membrane</location>
        <topology evidence="31">Multi-pass membrane protein</topology>
    </subcellularLocation>
    <subcellularLocation>
        <location evidence="2">Host cytoplasm</location>
    </subcellularLocation>
    <text evidence="32">Gammacoronaviruses induce membrane zippering to form zippered endoplasmic reticulum (zER).</text>
</comment>
<comment type="subcellular location">
    <molecule>Non-structural protein 6</molecule>
    <subcellularLocation>
        <location evidence="32">Host endoplasmic reticulum membrane</location>
        <topology evidence="31">Multi-pass membrane protein</topology>
    </subcellularLocation>
    <text evidence="32">Gammacoronaviruses induce membrane zippering to form zippered endoplasmic reticulum (zER).</text>
</comment>
<comment type="subcellular location">
    <molecule>Non-structural protein 7</molecule>
    <subcellularLocation>
        <location evidence="1">Host cytoplasm</location>
        <location evidence="1">Host perinuclear region</location>
    </subcellularLocation>
    <subcellularLocation>
        <location evidence="4">Host cytoplasm</location>
    </subcellularLocation>
    <subcellularLocation>
        <location evidence="4">Host endoplasmic reticulum</location>
    </subcellularLocation>
    <text>nsp7, nsp8, nsp9 and nsp10 are localized in cytoplasmic foci, largely perinuclear. Late in infection, they merge into confluent complexes.</text>
</comment>
<comment type="subcellular location">
    <molecule>Non-structural protein 8</molecule>
    <subcellularLocation>
        <location evidence="2">Host cytoplasm</location>
        <location evidence="2">Host perinuclear region</location>
    </subcellularLocation>
    <subcellularLocation>
        <location evidence="4">Host cytoplasm</location>
    </subcellularLocation>
    <subcellularLocation>
        <location evidence="4">Host endoplasmic reticulum</location>
    </subcellularLocation>
    <text>nsp7, nsp8, nsp9 and nsp10 are localized in cytoplasmic foci, largely perinuclear. Late in infection, they merge into confluent complexes.</text>
</comment>
<comment type="subcellular location">
    <molecule>Viral protein genome-linked nsp9</molecule>
    <subcellularLocation>
        <location evidence="1">Host cytoplasm</location>
        <location evidence="1">Host perinuclear region</location>
    </subcellularLocation>
    <subcellularLocation>
        <location evidence="4">Host cytoplasm</location>
    </subcellularLocation>
    <subcellularLocation>
        <location evidence="4">Host endoplasmic reticulum</location>
    </subcellularLocation>
    <text>nsp7, nsp8, nsp9 and nsp10 are localized in cytoplasmic foci, largely perinuclear. Late in infection, they merge into confluent complexes.</text>
</comment>
<comment type="subcellular location">
    <molecule>Non-structural protein 10</molecule>
    <subcellularLocation>
        <location evidence="1">Host cytoplasm</location>
        <location evidence="1">Host perinuclear region</location>
    </subcellularLocation>
    <subcellularLocation>
        <location evidence="4">Host cytoplasm</location>
    </subcellularLocation>
    <subcellularLocation>
        <location evidence="4">Host endoplasmic reticulum</location>
    </subcellularLocation>
    <text>nsp7, nsp8, nsp9 and nsp10 are localized in cytoplasmic foci, largely perinuclear. Late in infection, they merge into confluent complexes.</text>
</comment>
<comment type="subcellular location">
    <molecule>Helicase</molecule>
    <subcellularLocation>
        <location evidence="31">Host endoplasmic reticulum-Golgi intermediate compartment</location>
    </subcellularLocation>
    <text>The helicase interacts with the N protein in membranous complexes and colocalizes with sites of synthesis of new viral RNA.</text>
</comment>
<comment type="subcellular location">
    <molecule>Proofreading exoribonuclease</molecule>
    <subcellularLocation>
        <location evidence="4">Host cytoplasm</location>
    </subcellularLocation>
    <subcellularLocation>
        <location evidence="4">Host endoplasmic reticulum</location>
    </subcellularLocation>
</comment>
<comment type="subcellular location">
    <molecule>Uridylate-specific endoribonuclease</molecule>
    <subcellularLocation>
        <location evidence="4">Host cytoplasm</location>
    </subcellularLocation>
    <subcellularLocation>
        <location evidence="4">Host endoplasmic reticulum</location>
    </subcellularLocation>
</comment>
<comment type="alternative products">
    <event type="ribosomal frameshifting"/>
    <isoform>
        <id>P0C6Y3-1</id>
        <name>Replicase polyprotein 1ab</name>
        <name>pp1ab</name>
        <sequence type="displayed"/>
    </isoform>
    <isoform>
        <id>P0C6V5-1</id>
        <name>Replicase polyprotein 1a</name>
        <name>pp1a</name>
        <name>ORF1a polyprotein</name>
        <sequence type="external"/>
    </isoform>
    <text evidence="31">Isoform Replicase polyprotein 1ab is produced by -1 ribosomal frameshifting at the 1a-1b genes boundary. Isoform Replicase polyprotein 1a is produced by conventional translation.</text>
</comment>
<comment type="domain">
    <molecule>Papain-like protease</molecule>
    <text evidence="2">The hydrophobic region HD1 probably mediates the membrane association of the replication complex.</text>
</comment>
<comment type="domain">
    <molecule>Non-structural protein 4</molecule>
    <text evidence="2">The hydrophobic region HD2 probably mediates the membrane association of the replication complex.</text>
</comment>
<comment type="domain">
    <molecule>Non-structural protein 6</molecule>
    <text evidence="2">The hydrophobic region HD3 probably mediates the membrane association of the replication complex.</text>
</comment>
<comment type="PTM">
    <molecule>Isoform Replicase polyprotein 1ab</molecule>
    <text evidence="2">Specific enzymatic cleavages in vivo by its own proteases yield mature proteins (By similarity). 3C-like proteinase nsp5 liberates nsps 6-16 from the polyprotein (By similarity). Papain-like and 3C-like proteinases are autocatalytically processed.</text>
</comment>
<comment type="PTM">
    <molecule>Non-structural protein 4</molecule>
    <text evidence="3">N-glycosylated.</text>
</comment>
<comment type="similarity">
    <text evidence="31">Belongs to the coronaviruses polyprotein 1ab family.</text>
</comment>
<comment type="sequence caution" evidence="31">
    <conflict type="erroneous gene model prediction">
        <sequence resource="EMBL-CDS" id="AAW33784"/>
    </conflict>
</comment>
<comment type="sequence caution" evidence="31">
    <conflict type="erroneous gene model prediction">
        <sequence resource="EMBL-CDS" id="AAW33785"/>
    </conflict>
</comment>
<comment type="sequence caution" evidence="31">
    <conflict type="erroneous gene model prediction">
        <sequence resource="EMBL-CDS" id="ABI26421"/>
    </conflict>
</comment>
<comment type="sequence caution" evidence="31">
    <conflict type="erroneous gene model prediction">
        <sequence resource="EMBL-CDS" id="ABI26422"/>
    </conflict>
</comment>
<name>R1AB_IBVM</name>
<feature type="chain" id="PRO_0000283889" description="Non-structural protein 2">
    <location>
        <begin position="1"/>
        <end position="673"/>
    </location>
</feature>
<feature type="chain" id="PRO_0000283890" description="Papain-like protease">
    <location>
        <begin position="674"/>
        <end position="2267"/>
    </location>
</feature>
<feature type="chain" id="PRO_0000283891" description="Non-structural protein 4">
    <location>
        <begin position="2268"/>
        <end position="2781"/>
    </location>
</feature>
<feature type="chain" id="PRO_0000283892" description="3C-like proteinase">
    <location>
        <begin position="2782"/>
        <end position="3088"/>
    </location>
</feature>
<feature type="chain" id="PRO_0000283893" description="Non-structural protein 6">
    <location>
        <begin position="3089"/>
        <end position="3381"/>
    </location>
</feature>
<feature type="chain" id="PRO_0000283894" description="Non-structural protein 7">
    <location>
        <begin position="3382"/>
        <end position="3464"/>
    </location>
</feature>
<feature type="chain" id="PRO_0000283895" description="Non-structural protein 8">
    <location>
        <begin position="3465"/>
        <end position="3674"/>
    </location>
</feature>
<feature type="chain" id="PRO_0000283896" description="Viral protein genome-linked nsp9">
    <location>
        <begin position="3675"/>
        <end position="3785"/>
    </location>
</feature>
<feature type="chain" id="PRO_0000283897" description="Non-structural protein 10">
    <location>
        <begin position="3786"/>
        <end position="3930"/>
    </location>
</feature>
<feature type="chain" id="PRO_0000283898" description="RNA-directed RNA polymerase nsp12">
    <location>
        <begin position="3931"/>
        <end position="4870"/>
    </location>
</feature>
<feature type="chain" id="PRO_0000283899" description="Helicase">
    <location>
        <begin position="4871"/>
        <end position="5470"/>
    </location>
</feature>
<feature type="chain" id="PRO_0000283900" description="Proofreading exoribonuclease">
    <location>
        <begin position="5471"/>
        <end position="5991"/>
    </location>
</feature>
<feature type="chain" id="PRO_0000283901" description="Uridylate-specific endoribonuclease">
    <location>
        <begin position="5992"/>
        <end position="6329"/>
    </location>
</feature>
<feature type="chain" id="PRO_0000283902" description="2'-O-methyl transferase">
    <location>
        <begin position="6330"/>
        <end position="6631"/>
    </location>
</feature>
<feature type="topological domain" description="Cytoplasmic" evidence="2">
    <location>
        <begin position="1"/>
        <end position="1752"/>
    </location>
</feature>
<feature type="transmembrane region" description="Helical" evidence="5">
    <location>
        <begin position="1753"/>
        <end position="1773"/>
    </location>
</feature>
<feature type="topological domain" description="Lumenal" evidence="2">
    <location>
        <begin position="1774"/>
        <end position="1845"/>
    </location>
</feature>
<feature type="transmembrane region" description="Helical" evidence="5">
    <location>
        <begin position="1846"/>
        <end position="1866"/>
    </location>
</feature>
<feature type="topological domain" description="Cytoplasmic" evidence="2">
    <location>
        <begin position="1867"/>
        <end position="2282"/>
    </location>
</feature>
<feature type="transmembrane region" description="Helical" evidence="5">
    <location>
        <begin position="2283"/>
        <end position="2303"/>
    </location>
</feature>
<feature type="topological domain" description="Lumenal" evidence="2">
    <location>
        <begin position="2304"/>
        <end position="2561"/>
    </location>
</feature>
<feature type="transmembrane region" description="Helical" evidence="5">
    <location>
        <begin position="2562"/>
        <end position="2582"/>
    </location>
</feature>
<feature type="topological domain" description="Cytoplasmic" evidence="2">
    <location>
        <begin position="2583"/>
        <end position="2613"/>
    </location>
</feature>
<feature type="transmembrane region" description="Helical" evidence="5">
    <location>
        <begin position="2614"/>
        <end position="2634"/>
    </location>
</feature>
<feature type="topological domain" description="Lumenal" evidence="2">
    <location>
        <begin position="2635"/>
        <end position="2645"/>
    </location>
</feature>
<feature type="transmembrane region" description="Helical" evidence="5">
    <location>
        <begin position="2646"/>
        <end position="2666"/>
    </location>
</feature>
<feature type="topological domain" description="Cytoplasmic" evidence="2">
    <location>
        <begin position="2667"/>
        <end position="3098"/>
    </location>
</feature>
<feature type="transmembrane region" description="Helical" evidence="5">
    <location>
        <begin position="3099"/>
        <end position="3119"/>
    </location>
</feature>
<feature type="topological domain" description="Lumenal" evidence="2">
    <location>
        <begin position="3120"/>
        <end position="3123"/>
    </location>
</feature>
<feature type="transmembrane region" description="Helical" evidence="5">
    <location>
        <begin position="3124"/>
        <end position="3144"/>
    </location>
</feature>
<feature type="topological domain" description="Cytoplasmic" evidence="2">
    <location>
        <begin position="3145"/>
        <end position="3153"/>
    </location>
</feature>
<feature type="transmembrane region" description="Helical" evidence="5">
    <location>
        <begin position="3154"/>
        <end position="3174"/>
    </location>
</feature>
<feature type="topological domain" description="Lumenal" evidence="2">
    <location>
        <begin position="3175"/>
        <end position="3190"/>
    </location>
</feature>
<feature type="transmembrane region" description="Helical" evidence="5">
    <location>
        <begin position="3191"/>
        <end position="3211"/>
    </location>
</feature>
<feature type="topological domain" description="Cytoplasmic" evidence="2">
    <location>
        <begin position="3212"/>
        <end position="3259"/>
    </location>
</feature>
<feature type="transmembrane region" description="Helical" evidence="5">
    <location>
        <begin position="3260"/>
        <end position="3280"/>
    </location>
</feature>
<feature type="topological domain" description="Lumenal" evidence="2">
    <location>
        <begin position="3281"/>
        <end position="3298"/>
    </location>
</feature>
<feature type="transmembrane region" description="Helical" evidence="5">
    <location>
        <begin position="3299"/>
        <end position="3319"/>
    </location>
</feature>
<feature type="topological domain" description="Cytoplasmic" evidence="2">
    <location>
        <begin position="3320"/>
        <end position="6631"/>
    </location>
</feature>
<feature type="domain" description="Ubiquitin-like 1" evidence="6">
    <location>
        <begin position="675"/>
        <end position="780"/>
    </location>
</feature>
<feature type="domain" description="Macro" evidence="8">
    <location>
        <begin position="1005"/>
        <end position="1181"/>
    </location>
</feature>
<feature type="domain" description="Ubiquitin-like 2" evidence="6">
    <location>
        <begin position="1177"/>
        <end position="1229"/>
    </location>
</feature>
<feature type="domain" description="Peptidase C16" evidence="7">
    <location>
        <begin position="1238"/>
        <end position="1499"/>
    </location>
</feature>
<feature type="domain" description="3Ecto" evidence="26">
    <location>
        <begin position="1771"/>
        <end position="1835"/>
    </location>
</feature>
<feature type="domain" description="CoV Nsp3 Y" evidence="25">
    <location>
        <begin position="1913"/>
        <end position="2265"/>
    </location>
</feature>
<feature type="domain" description="Nsp4C" evidence="12">
    <location>
        <begin position="2686"/>
        <end position="2781"/>
    </location>
</feature>
<feature type="domain" description="Peptidase C30" evidence="10">
    <location>
        <begin position="2782"/>
        <end position="3088"/>
    </location>
</feature>
<feature type="domain" description="RdRp Nsp7 cofactor" evidence="15">
    <location>
        <begin position="3382"/>
        <end position="3464"/>
    </location>
</feature>
<feature type="domain" description="RdRp Nsp8 cofactor" evidence="16">
    <location>
        <begin position="3465"/>
        <end position="3674"/>
    </location>
</feature>
<feature type="domain" description="Nsp9 ssRNA-binding" evidence="17">
    <location>
        <begin position="3675"/>
        <end position="3785"/>
    </location>
</feature>
<feature type="domain" description="ExoN/MTase coactivator" evidence="18">
    <location>
        <begin position="3787"/>
        <end position="3928"/>
    </location>
</feature>
<feature type="domain" description="NiRAN" evidence="13">
    <location>
        <begin position="3942"/>
        <end position="4200"/>
    </location>
</feature>
<feature type="domain" description="Nsp12 Interface" evidence="27">
    <location>
        <begin position="4205"/>
        <end position="4303"/>
    </location>
</feature>
<feature type="domain" description="Nsp12 RNA-dependent RNA polymerase" evidence="14">
    <location>
        <begin position="4304"/>
        <end position="4870"/>
    </location>
</feature>
<feature type="domain" description="RdRp catalytic" evidence="9">
    <location>
        <begin position="4550"/>
        <end position="4712"/>
    </location>
</feature>
<feature type="domain" description="CV ZBD" evidence="11">
    <location>
        <begin position="4871"/>
        <end position="4983"/>
    </location>
</feature>
<feature type="domain" description="(+)RNA virus helicase ATP-binding">
    <location>
        <begin position="5127"/>
        <end position="5307"/>
    </location>
</feature>
<feature type="domain" description="(+)RNA virus helicase C-terminal">
    <location>
        <begin position="5308"/>
        <end position="5479"/>
    </location>
</feature>
<feature type="domain" description="ExoN" evidence="19">
    <location>
        <begin position="5541"/>
        <end position="5755"/>
    </location>
</feature>
<feature type="domain" description="N7-MTase" evidence="20">
    <location>
        <begin position="5764"/>
        <end position="5991"/>
    </location>
</feature>
<feature type="domain" description="Nsp15 N-terminal oligomerization" evidence="23">
    <location>
        <begin position="5992"/>
        <end position="6052"/>
    </location>
</feature>
<feature type="domain" description="AV-Nsp11N/CoV-Nsp15M" evidence="24">
    <location>
        <begin position="6053"/>
        <end position="6168"/>
    </location>
</feature>
<feature type="domain" description="NendoU" evidence="22">
    <location>
        <begin position="6185"/>
        <end position="6326"/>
    </location>
</feature>
<feature type="domain" description="Nidovirus-type SAM-dependent 2'-O-MTase" evidence="21">
    <location>
        <begin position="6329"/>
        <end position="6628"/>
    </location>
</feature>
<feature type="zinc finger region" description="C4-type; degenerate" evidence="7">
    <location>
        <begin position="1355"/>
        <end position="1392"/>
    </location>
</feature>
<feature type="zinc finger region" evidence="1">
    <location>
        <begin position="3860"/>
        <end position="3880"/>
    </location>
</feature>
<feature type="zinc finger region" evidence="1">
    <location>
        <begin position="3906"/>
        <end position="3919"/>
    </location>
</feature>
<feature type="region of interest" description="HD1" evidence="2">
    <location>
        <begin position="1753"/>
        <end position="1866"/>
    </location>
</feature>
<feature type="region of interest" description="Y1" evidence="25">
    <location>
        <begin position="1913"/>
        <end position="2003"/>
    </location>
</feature>
<feature type="region of interest" description="ZF1" evidence="25">
    <location>
        <begin position="1917"/>
        <end position="1930"/>
    </location>
</feature>
<feature type="region of interest" description="ZF2" evidence="25">
    <location>
        <begin position="1963"/>
        <end position="1973"/>
    </location>
</feature>
<feature type="region of interest" description="CoV-Y" evidence="25">
    <location>
        <begin position="2004"/>
        <end position="2265"/>
    </location>
</feature>
<feature type="region of interest" description="Y2" evidence="25">
    <location>
        <begin position="2004"/>
        <end position="2106"/>
    </location>
</feature>
<feature type="region of interest" description="Y3" evidence="25">
    <location>
        <begin position="2107"/>
        <end position="2165"/>
    </location>
</feature>
<feature type="region of interest" description="Y4" evidence="25">
    <location>
        <begin position="2166"/>
        <end position="2265"/>
    </location>
</feature>
<feature type="region of interest" description="HD2" evidence="2">
    <location>
        <begin position="2283"/>
        <end position="2666"/>
    </location>
</feature>
<feature type="region of interest" description="HD3" evidence="2">
    <location>
        <begin position="3099"/>
        <end position="3319"/>
    </location>
</feature>
<feature type="region of interest" description="RdRp Fingers N-ter" evidence="14">
    <location>
        <begin position="4306"/>
        <end position="4519"/>
    </location>
</feature>
<feature type="region of interest" description="RdRp Palm N-ter" evidence="14">
    <location>
        <begin position="4520"/>
        <end position="4558"/>
    </location>
</feature>
<feature type="region of interest" description="RdRp Fingers C-ter" evidence="14">
    <location>
        <begin position="4559"/>
        <end position="4617"/>
    </location>
</feature>
<feature type="region of interest" description="RdRp Palm C-ter" evidence="14">
    <location>
        <begin position="4618"/>
        <end position="4753"/>
    </location>
</feature>
<feature type="region of interest" description="RdRp Thumb" evidence="14">
    <location>
        <begin position="4754"/>
        <end position="4870"/>
    </location>
</feature>
<feature type="region of interest" description="GpppA-binding" evidence="20">
    <location>
        <begin position="5879"/>
        <end position="5893"/>
    </location>
</feature>
<feature type="active site" description="For PL-PRO activity" evidence="7">
    <location>
        <position position="1276"/>
    </location>
</feature>
<feature type="active site" description="For PL-PRO activity" evidence="7">
    <location>
        <position position="1439"/>
    </location>
</feature>
<feature type="active site" description="For PL-PRO activity" evidence="7">
    <location>
        <position position="1450"/>
    </location>
</feature>
<feature type="active site" description="For 3CL-PRO activity" evidence="10">
    <location>
        <position position="2822"/>
    </location>
</feature>
<feature type="active site" description="For 3CL-PRO activity" evidence="10">
    <location>
        <position position="2924"/>
    </location>
</feature>
<feature type="active site" evidence="14">
    <location>
        <position position="4697"/>
    </location>
</feature>
<feature type="active site" evidence="14">
    <location>
        <position position="4698"/>
    </location>
</feature>
<feature type="active site" evidence="14">
    <location>
        <position position="4699"/>
    </location>
</feature>
<feature type="active site" evidence="19">
    <location>
        <position position="5559"/>
    </location>
</feature>
<feature type="active site" evidence="19">
    <location>
        <position position="5561"/>
    </location>
</feature>
<feature type="active site" evidence="19">
    <location>
        <position position="5660"/>
    </location>
</feature>
<feature type="active site" evidence="19">
    <location>
        <position position="5736"/>
    </location>
</feature>
<feature type="active site" evidence="19">
    <location>
        <position position="5741"/>
    </location>
</feature>
<feature type="active site" evidence="22">
    <location>
        <position position="6214"/>
    </location>
</feature>
<feature type="active site" evidence="22">
    <location>
        <position position="6229"/>
    </location>
</feature>
<feature type="active site" evidence="22">
    <location>
        <position position="6269"/>
    </location>
</feature>
<feature type="active site" evidence="21">
    <location>
        <position position="6373"/>
    </location>
</feature>
<feature type="active site" evidence="21">
    <location>
        <position position="6457"/>
    </location>
</feature>
<feature type="active site" evidence="21">
    <location>
        <position position="6501"/>
    </location>
</feature>
<feature type="active site" evidence="21">
    <location>
        <position position="6534"/>
    </location>
</feature>
<feature type="binding site" evidence="25">
    <location>
        <position position="1917"/>
    </location>
    <ligand>
        <name>Zn(2+)</name>
        <dbReference type="ChEBI" id="CHEBI:29105"/>
        <label>1</label>
    </ligand>
</feature>
<feature type="binding site" evidence="25">
    <location>
        <position position="1922"/>
    </location>
    <ligand>
        <name>Zn(2+)</name>
        <dbReference type="ChEBI" id="CHEBI:29105"/>
        <label>1</label>
    </ligand>
</feature>
<feature type="binding site" evidence="25">
    <location>
        <position position="1927"/>
    </location>
    <ligand>
        <name>Zn(2+)</name>
        <dbReference type="ChEBI" id="CHEBI:29105"/>
        <label>1</label>
    </ligand>
</feature>
<feature type="binding site" evidence="25">
    <location>
        <position position="1930"/>
    </location>
    <ligand>
        <name>Zn(2+)</name>
        <dbReference type="ChEBI" id="CHEBI:29105"/>
        <label>1</label>
    </ligand>
</feature>
<feature type="binding site" evidence="25">
    <location>
        <position position="1963"/>
    </location>
    <ligand>
        <name>Zn(2+)</name>
        <dbReference type="ChEBI" id="CHEBI:29105"/>
        <label>2</label>
    </ligand>
</feature>
<feature type="binding site" evidence="25">
    <location>
        <position position="1966"/>
    </location>
    <ligand>
        <name>Zn(2+)</name>
        <dbReference type="ChEBI" id="CHEBI:29105"/>
        <label>2</label>
    </ligand>
</feature>
<feature type="binding site" evidence="25">
    <location>
        <position position="1970"/>
    </location>
    <ligand>
        <name>Zn(2+)</name>
        <dbReference type="ChEBI" id="CHEBI:29105"/>
        <label>2</label>
    </ligand>
</feature>
<feature type="binding site" evidence="25">
    <location>
        <position position="1973"/>
    </location>
    <ligand>
        <name>Zn(2+)</name>
        <dbReference type="ChEBI" id="CHEBI:29105"/>
        <label>2</label>
    </ligand>
</feature>
<feature type="binding site" evidence="18">
    <location>
        <position position="3860"/>
    </location>
    <ligand>
        <name>Zn(2+)</name>
        <dbReference type="ChEBI" id="CHEBI:29105"/>
        <label>3</label>
    </ligand>
</feature>
<feature type="binding site" evidence="18">
    <location>
        <position position="3863"/>
    </location>
    <ligand>
        <name>Zn(2+)</name>
        <dbReference type="ChEBI" id="CHEBI:29105"/>
        <label>3</label>
    </ligand>
</feature>
<feature type="binding site" evidence="18">
    <location>
        <position position="3869"/>
    </location>
    <ligand>
        <name>Zn(2+)</name>
        <dbReference type="ChEBI" id="CHEBI:29105"/>
        <label>3</label>
    </ligand>
</feature>
<feature type="binding site" evidence="18">
    <location>
        <position position="3880"/>
    </location>
    <ligand>
        <name>Zn(2+)</name>
        <dbReference type="ChEBI" id="CHEBI:29105"/>
        <label>3</label>
    </ligand>
</feature>
<feature type="binding site" evidence="18">
    <location>
        <position position="3906"/>
    </location>
    <ligand>
        <name>Zn(2+)</name>
        <dbReference type="ChEBI" id="CHEBI:29105"/>
        <label>4</label>
    </ligand>
</feature>
<feature type="binding site" evidence="18">
    <location>
        <position position="3909"/>
    </location>
    <ligand>
        <name>Zn(2+)</name>
        <dbReference type="ChEBI" id="CHEBI:29105"/>
        <label>4</label>
    </ligand>
</feature>
<feature type="binding site" evidence="18">
    <location>
        <position position="3917"/>
    </location>
    <ligand>
        <name>Zn(2+)</name>
        <dbReference type="ChEBI" id="CHEBI:29105"/>
        <label>4</label>
    </ligand>
</feature>
<feature type="binding site" evidence="18">
    <location>
        <position position="3919"/>
    </location>
    <ligand>
        <name>Zn(2+)</name>
        <dbReference type="ChEBI" id="CHEBI:29105"/>
        <label>4</label>
    </ligand>
</feature>
<feature type="binding site" evidence="27">
    <location>
        <position position="4234"/>
    </location>
    <ligand>
        <name>Zn(2+)</name>
        <dbReference type="ChEBI" id="CHEBI:29105"/>
        <label>5</label>
    </ligand>
</feature>
<feature type="binding site" evidence="27">
    <location>
        <position position="4240"/>
    </location>
    <ligand>
        <name>Zn(2+)</name>
        <dbReference type="ChEBI" id="CHEBI:29105"/>
        <label>5</label>
    </ligand>
</feature>
<feature type="binding site" evidence="27">
    <location>
        <position position="4245"/>
    </location>
    <ligand>
        <name>Zn(2+)</name>
        <dbReference type="ChEBI" id="CHEBI:29105"/>
        <label>5</label>
    </ligand>
</feature>
<feature type="binding site" evidence="27">
    <location>
        <position position="4249"/>
    </location>
    <ligand>
        <name>Zn(2+)</name>
        <dbReference type="ChEBI" id="CHEBI:29105"/>
        <label>5</label>
    </ligand>
</feature>
<feature type="binding site" evidence="14">
    <location>
        <position position="4426"/>
    </location>
    <ligand>
        <name>Zn(2+)</name>
        <dbReference type="ChEBI" id="CHEBI:29105"/>
        <label>6</label>
    </ligand>
</feature>
<feature type="binding site" evidence="14">
    <location>
        <position position="4580"/>
    </location>
    <ligand>
        <name>Zn(2+)</name>
        <dbReference type="ChEBI" id="CHEBI:29105"/>
        <label>6</label>
    </ligand>
</feature>
<feature type="binding site" evidence="14">
    <location>
        <position position="4583"/>
    </location>
    <ligand>
        <name>Zn(2+)</name>
        <dbReference type="ChEBI" id="CHEBI:29105"/>
        <label>6</label>
    </ligand>
</feature>
<feature type="binding site" evidence="14">
    <location>
        <position position="4584"/>
    </location>
    <ligand>
        <name>Zn(2+)</name>
        <dbReference type="ChEBI" id="CHEBI:29105"/>
        <label>6</label>
    </ligand>
</feature>
<feature type="binding site" evidence="11">
    <location>
        <position position="4875"/>
    </location>
    <ligand>
        <name>Zn(2+)</name>
        <dbReference type="ChEBI" id="CHEBI:29105"/>
        <label>7</label>
    </ligand>
</feature>
<feature type="binding site" evidence="11">
    <location>
        <position position="4878"/>
    </location>
    <ligand>
        <name>Zn(2+)</name>
        <dbReference type="ChEBI" id="CHEBI:29105"/>
        <label>7</label>
    </ligand>
</feature>
<feature type="binding site" evidence="11">
    <location>
        <position position="4886"/>
    </location>
    <ligand>
        <name>Zn(2+)</name>
        <dbReference type="ChEBI" id="CHEBI:29105"/>
        <label>8</label>
    </ligand>
</feature>
<feature type="binding site" evidence="11">
    <location>
        <position position="4889"/>
    </location>
    <ligand>
        <name>Zn(2+)</name>
        <dbReference type="ChEBI" id="CHEBI:29105"/>
        <label>8</label>
    </ligand>
</feature>
<feature type="binding site" evidence="11">
    <location>
        <position position="4896"/>
    </location>
    <ligand>
        <name>Zn(2+)</name>
        <dbReference type="ChEBI" id="CHEBI:29105"/>
        <label>7</label>
    </ligand>
</feature>
<feature type="binding site" evidence="11">
    <location>
        <position position="4899"/>
    </location>
    <ligand>
        <name>Zn(2+)</name>
        <dbReference type="ChEBI" id="CHEBI:29105"/>
        <label>7</label>
    </ligand>
</feature>
<feature type="binding site" evidence="11">
    <location>
        <position position="4903"/>
    </location>
    <ligand>
        <name>Zn(2+)</name>
        <dbReference type="ChEBI" id="CHEBI:29105"/>
        <label>8</label>
    </ligand>
</feature>
<feature type="binding site" evidence="11">
    <location>
        <position position="4909"/>
    </location>
    <ligand>
        <name>Zn(2+)</name>
        <dbReference type="ChEBI" id="CHEBI:29105"/>
        <label>8</label>
    </ligand>
</feature>
<feature type="binding site" evidence="11">
    <location>
        <position position="4920"/>
    </location>
    <ligand>
        <name>Zn(2+)</name>
        <dbReference type="ChEBI" id="CHEBI:29105"/>
        <label>9</label>
    </ligand>
</feature>
<feature type="binding site" evidence="11">
    <location>
        <position position="4925"/>
    </location>
    <ligand>
        <name>Zn(2+)</name>
        <dbReference type="ChEBI" id="CHEBI:29105"/>
        <label>9</label>
    </ligand>
</feature>
<feature type="binding site" evidence="11">
    <location>
        <position position="4942"/>
    </location>
    <ligand>
        <name>Zn(2+)</name>
        <dbReference type="ChEBI" id="CHEBI:29105"/>
        <label>9</label>
    </ligand>
</feature>
<feature type="binding site" evidence="11">
    <location>
        <position position="4945"/>
    </location>
    <ligand>
        <name>Zn(2+)</name>
        <dbReference type="ChEBI" id="CHEBI:29105"/>
        <label>9</label>
    </ligand>
</feature>
<feature type="binding site" evidence="1">
    <location>
        <begin position="5152"/>
        <end position="5159"/>
    </location>
    <ligand>
        <name>ATP</name>
        <dbReference type="ChEBI" id="CHEBI:30616"/>
    </ligand>
</feature>
<feature type="binding site" evidence="19">
    <location>
        <position position="5676"/>
    </location>
    <ligand>
        <name>Zn(2+)</name>
        <dbReference type="ChEBI" id="CHEBI:29105"/>
        <label>10</label>
    </ligand>
</feature>
<feature type="binding site" evidence="19">
    <location>
        <position position="5678"/>
    </location>
    <ligand>
        <name>Zn(2+)</name>
        <dbReference type="ChEBI" id="CHEBI:29105"/>
        <label>10</label>
    </ligand>
</feature>
<feature type="binding site" evidence="19">
    <location>
        <position position="5694"/>
    </location>
    <ligand>
        <name>Zn(2+)</name>
        <dbReference type="ChEBI" id="CHEBI:29105"/>
        <label>10</label>
    </ligand>
</feature>
<feature type="binding site" evidence="19">
    <location>
        <position position="5697"/>
    </location>
    <ligand>
        <name>Zn(2+)</name>
        <dbReference type="ChEBI" id="CHEBI:29105"/>
        <label>10</label>
    </ligand>
</feature>
<feature type="binding site" evidence="19">
    <location>
        <position position="5725"/>
    </location>
    <ligand>
        <name>Zn(2+)</name>
        <dbReference type="ChEBI" id="CHEBI:29105"/>
        <label>11</label>
    </ligand>
</feature>
<feature type="binding site" evidence="19">
    <location>
        <position position="5729"/>
    </location>
    <ligand>
        <name>Zn(2+)</name>
        <dbReference type="ChEBI" id="CHEBI:29105"/>
        <label>11</label>
    </ligand>
</feature>
<feature type="binding site" evidence="19">
    <location>
        <position position="5732"/>
    </location>
    <ligand>
        <name>Zn(2+)</name>
        <dbReference type="ChEBI" id="CHEBI:29105"/>
        <label>11</label>
    </ligand>
</feature>
<feature type="binding site" evidence="19">
    <location>
        <position position="5747"/>
    </location>
    <ligand>
        <name>Zn(2+)</name>
        <dbReference type="ChEBI" id="CHEBI:29105"/>
        <label>11</label>
    </ligand>
</feature>
<feature type="binding site" evidence="20">
    <location>
        <begin position="5799"/>
        <end position="5805"/>
    </location>
    <ligand>
        <name>S-adenosyl-L-methionine</name>
        <dbReference type="ChEBI" id="CHEBI:59789"/>
    </ligand>
</feature>
<feature type="binding site" evidence="20">
    <location>
        <position position="5917"/>
    </location>
    <ligand>
        <name>Zn(2+)</name>
        <dbReference type="ChEBI" id="CHEBI:29105"/>
        <label>12</label>
    </ligand>
</feature>
<feature type="binding site" evidence="20">
    <location>
        <position position="5937"/>
    </location>
    <ligand>
        <name>Zn(2+)</name>
        <dbReference type="ChEBI" id="CHEBI:29105"/>
        <label>12</label>
    </ligand>
</feature>
<feature type="binding site" evidence="20">
    <location>
        <position position="5948"/>
    </location>
    <ligand>
        <name>Zn(2+)</name>
        <dbReference type="ChEBI" id="CHEBI:29105"/>
        <label>12</label>
    </ligand>
</feature>
<feature type="binding site" evidence="20">
    <location>
        <position position="5951"/>
    </location>
    <ligand>
        <name>Zn(2+)</name>
        <dbReference type="ChEBI" id="CHEBI:29105"/>
        <label>12</label>
    </ligand>
</feature>
<feature type="site" description="Cleavage; by PL-PRO" evidence="2">
    <location>
        <begin position="673"/>
        <end position="674"/>
    </location>
</feature>
<feature type="site" description="Cleavage; by PL-PRO" evidence="2">
    <location>
        <begin position="2267"/>
        <end position="2268"/>
    </location>
</feature>
<feature type="site" description="Cleavage; by 3CL-PRO" evidence="2">
    <location>
        <begin position="2781"/>
        <end position="2782"/>
    </location>
</feature>
<feature type="site" description="Cleavage; by 3CL-PRO" evidence="2">
    <location>
        <begin position="3088"/>
        <end position="3089"/>
    </location>
</feature>
<feature type="site" description="Cleavage; by 3CL-PRO" evidence="2">
    <location>
        <begin position="3381"/>
        <end position="3382"/>
    </location>
</feature>
<feature type="site" description="Cleavage; by 3CL-PRO" evidence="2">
    <location>
        <begin position="3464"/>
        <end position="3465"/>
    </location>
</feature>
<feature type="site" description="Cleavage; by 3CL-PRO" evidence="2">
    <location>
        <begin position="3674"/>
        <end position="3675"/>
    </location>
</feature>
<feature type="site" description="Cleavage; by 3CL-PRO" evidence="2">
    <location>
        <begin position="3785"/>
        <end position="3786"/>
    </location>
</feature>
<feature type="site" description="Cleavage; by 3CL-PRO" evidence="2">
    <location>
        <begin position="3930"/>
        <end position="3931"/>
    </location>
</feature>
<feature type="site" description="Cleavage; by 3CL-PRO" evidence="2">
    <location>
        <begin position="4870"/>
        <end position="4871"/>
    </location>
</feature>
<feature type="site" description="Cleavage; by 3CL-PRO" evidence="2">
    <location>
        <begin position="5470"/>
        <end position="5471"/>
    </location>
</feature>
<feature type="site" description="Cleavage; by 3CL-PRO" evidence="2">
    <location>
        <begin position="5991"/>
        <end position="5992"/>
    </location>
</feature>
<feature type="site" description="Cleavage; by 3CL-PRO" evidence="2">
    <location>
        <begin position="6329"/>
        <end position="6330"/>
    </location>
</feature>
<feature type="disulfide bond" evidence="26">
    <location>
        <begin position="1787"/>
        <end position="1813"/>
    </location>
</feature>
<feature type="disulfide bond" evidence="26">
    <location>
        <begin position="1804"/>
        <end position="1810"/>
    </location>
</feature>
<feature type="sequence variant">
    <original>L</original>
    <variation>S</variation>
    <location>
        <position position="807"/>
    </location>
</feature>
<feature type="sequence variant">
    <original>S</original>
    <variation>F</variation>
    <location>
        <position position="1618"/>
    </location>
</feature>
<feature type="sequence variant">
    <original>S</original>
    <variation>A</variation>
    <location>
        <position position="1739"/>
    </location>
</feature>
<feature type="sequence variant">
    <original>M</original>
    <variation>L</variation>
    <location>
        <position position="2631"/>
    </location>
</feature>
<feature type="sequence variant">
    <original>S</original>
    <variation>P</variation>
    <location>
        <position position="2774"/>
    </location>
</feature>
<feature type="sequence variant">
    <original>D</original>
    <variation>G</variation>
    <location>
        <position position="4230"/>
    </location>
</feature>
<feature type="sequence variant">
    <original>S</original>
    <variation>P</variation>
    <location>
        <position position="4692"/>
    </location>
</feature>
<feature type="sequence variant">
    <original>Y</original>
    <variation>C</variation>
    <location>
        <position position="4859"/>
    </location>
</feature>
<feature type="sequence variant">
    <original>S</original>
    <variation>P</variation>
    <location>
        <position position="5104"/>
    </location>
</feature>
<feature type="sequence variant">
    <original>V</original>
    <variation>A</variation>
    <location>
        <position position="6033"/>
    </location>
</feature>
<feature type="sequence variant">
    <original>T</original>
    <variation>M</variation>
    <location>
        <position position="6080"/>
    </location>
</feature>
<feature type="sequence variant">
    <original>A</original>
    <variation>T</variation>
    <location>
        <position position="6314"/>
    </location>
</feature>
<feature type="mutagenesis site" description="Loss of dimerization for Non-structural protein 9." evidence="29">
    <original>F</original>
    <variation>G</variation>
    <location>
        <position position="3747"/>
    </location>
</feature>
<feature type="mutagenesis site" description="Loss of dimerization and nucleic acid binding for Non-structural protein 9." evidence="29">
    <original>I</original>
    <variation>D</variation>
    <location>
        <position position="3769"/>
    </location>
</feature>
<feature type="mutagenesis site" description="Loss of dimerization and nucleic acid binding for Non-structural protein 9." evidence="29">
    <original>G</original>
    <variation>D</variation>
    <location>
        <position position="3772"/>
    </location>
</feature>
<feature type="strand" evidence="37">
    <location>
        <begin position="17"/>
        <end position="19"/>
    </location>
</feature>
<feature type="helix" evidence="37">
    <location>
        <begin position="25"/>
        <end position="32"/>
    </location>
</feature>
<feature type="helix" evidence="37">
    <location>
        <begin position="42"/>
        <end position="57"/>
    </location>
</feature>
<feature type="strand" evidence="37">
    <location>
        <begin position="58"/>
        <end position="60"/>
    </location>
</feature>
<feature type="strand" evidence="37">
    <location>
        <begin position="62"/>
        <end position="66"/>
    </location>
</feature>
<feature type="strand" evidence="37">
    <location>
        <begin position="69"/>
        <end position="75"/>
    </location>
</feature>
<feature type="helix" evidence="37">
    <location>
        <begin position="94"/>
        <end position="100"/>
    </location>
</feature>
<feature type="helix" evidence="37">
    <location>
        <begin position="105"/>
        <end position="115"/>
    </location>
</feature>
<feature type="helix" evidence="37">
    <location>
        <begin position="116"/>
        <end position="118"/>
    </location>
</feature>
<feature type="turn" evidence="37">
    <location>
        <begin position="119"/>
        <end position="121"/>
    </location>
</feature>
<feature type="helix" evidence="37">
    <location>
        <begin position="124"/>
        <end position="137"/>
    </location>
</feature>
<feature type="helix" evidence="37">
    <location>
        <begin position="140"/>
        <end position="147"/>
    </location>
</feature>
<feature type="helix" evidence="37">
    <location>
        <begin position="152"/>
        <end position="158"/>
    </location>
</feature>
<feature type="helix" evidence="37">
    <location>
        <begin position="159"/>
        <end position="161"/>
    </location>
</feature>
<feature type="helix" evidence="37">
    <location>
        <begin position="162"/>
        <end position="174"/>
    </location>
</feature>
<feature type="helix" evidence="37">
    <location>
        <begin position="179"/>
        <end position="181"/>
    </location>
</feature>
<feature type="helix" evidence="37">
    <location>
        <begin position="182"/>
        <end position="197"/>
    </location>
</feature>
<feature type="strand" evidence="37">
    <location>
        <begin position="199"/>
        <end position="202"/>
    </location>
</feature>
<feature type="helix" evidence="37">
    <location>
        <begin position="203"/>
        <end position="205"/>
    </location>
</feature>
<feature type="helix" evidence="37">
    <location>
        <begin position="206"/>
        <end position="219"/>
    </location>
</feature>
<feature type="strand" evidence="37">
    <location>
        <begin position="226"/>
        <end position="229"/>
    </location>
</feature>
<feature type="strand" evidence="37">
    <location>
        <begin position="232"/>
        <end position="235"/>
    </location>
</feature>
<feature type="helix" evidence="37">
    <location>
        <begin position="236"/>
        <end position="238"/>
    </location>
</feature>
<feature type="helix" evidence="37">
    <location>
        <begin position="244"/>
        <end position="255"/>
    </location>
</feature>
<feature type="helix" evidence="37">
    <location>
        <begin position="261"/>
        <end position="263"/>
    </location>
</feature>
<feature type="strand" evidence="37">
    <location>
        <begin position="265"/>
        <end position="267"/>
    </location>
</feature>
<feature type="strand" evidence="37">
    <location>
        <begin position="270"/>
        <end position="273"/>
    </location>
</feature>
<feature type="strand" evidence="37">
    <location>
        <begin position="276"/>
        <end position="281"/>
    </location>
</feature>
<feature type="strand" evidence="37">
    <location>
        <begin position="285"/>
        <end position="287"/>
    </location>
</feature>
<feature type="strand" evidence="37">
    <location>
        <begin position="292"/>
        <end position="299"/>
    </location>
</feature>
<feature type="strand" evidence="37">
    <location>
        <begin position="306"/>
        <end position="310"/>
    </location>
</feature>
<feature type="strand" evidence="37">
    <location>
        <begin position="315"/>
        <end position="320"/>
    </location>
</feature>
<feature type="strand" evidence="37">
    <location>
        <begin position="327"/>
        <end position="334"/>
    </location>
</feature>
<feature type="strand" evidence="37">
    <location>
        <begin position="337"/>
        <end position="344"/>
    </location>
</feature>
<feature type="strand" evidence="37">
    <location>
        <begin position="347"/>
        <end position="354"/>
    </location>
</feature>
<feature type="strand" evidence="37">
    <location>
        <begin position="363"/>
        <end position="371"/>
    </location>
</feature>
<feature type="helix" evidence="37">
    <location>
        <begin position="377"/>
        <end position="390"/>
    </location>
</feature>
<feature type="helix" evidence="37">
    <location>
        <begin position="394"/>
        <end position="403"/>
    </location>
</feature>
<feature type="strand" evidence="37">
    <location>
        <begin position="407"/>
        <end position="409"/>
    </location>
</feature>
<feature type="strand" evidence="37">
    <location>
        <begin position="412"/>
        <end position="415"/>
    </location>
</feature>
<feature type="strand" evidence="37">
    <location>
        <begin position="424"/>
        <end position="426"/>
    </location>
</feature>
<feature type="helix" evidence="37">
    <location>
        <begin position="432"/>
        <end position="439"/>
    </location>
</feature>
<feature type="strand" evidence="37">
    <location>
        <begin position="441"/>
        <end position="443"/>
    </location>
</feature>
<feature type="strand" evidence="37">
    <location>
        <begin position="450"/>
        <end position="452"/>
    </location>
</feature>
<feature type="helix" evidence="37">
    <location>
        <begin position="455"/>
        <end position="467"/>
    </location>
</feature>
<feature type="turn" evidence="37">
    <location>
        <begin position="469"/>
        <end position="474"/>
    </location>
</feature>
<feature type="helix" evidence="37">
    <location>
        <begin position="478"/>
        <end position="491"/>
    </location>
</feature>
<feature type="helix" evidence="37">
    <location>
        <begin position="497"/>
        <end position="505"/>
    </location>
</feature>
<feature type="helix" evidence="37">
    <location>
        <begin position="511"/>
        <end position="519"/>
    </location>
</feature>
<feature type="helix" evidence="37">
    <location>
        <begin position="526"/>
        <end position="530"/>
    </location>
</feature>
<feature type="strand" evidence="37">
    <location>
        <begin position="534"/>
        <end position="537"/>
    </location>
</feature>
<feature type="strand" evidence="37">
    <location>
        <begin position="542"/>
        <end position="545"/>
    </location>
</feature>
<feature type="helix" evidence="37">
    <location>
        <begin position="553"/>
        <end position="561"/>
    </location>
</feature>
<feature type="strand" evidence="37">
    <location>
        <begin position="562"/>
        <end position="565"/>
    </location>
</feature>
<feature type="strand" evidence="37">
    <location>
        <begin position="570"/>
        <end position="572"/>
    </location>
</feature>
<feature type="strand" evidence="37">
    <location>
        <begin position="591"/>
        <end position="593"/>
    </location>
</feature>
<feature type="helix" evidence="35">
    <location>
        <begin position="2792"/>
        <end position="2795"/>
    </location>
</feature>
<feature type="strand" evidence="35">
    <location>
        <begin position="2798"/>
        <end position="2802"/>
    </location>
</feature>
<feature type="strand" evidence="35">
    <location>
        <begin position="2807"/>
        <end position="2813"/>
    </location>
</feature>
<feature type="strand" evidence="35">
    <location>
        <begin position="2816"/>
        <end position="2820"/>
    </location>
</feature>
<feature type="helix" evidence="35">
    <location>
        <begin position="2821"/>
        <end position="2824"/>
    </location>
</feature>
<feature type="turn" evidence="35">
    <location>
        <begin position="2829"/>
        <end position="2831"/>
    </location>
</feature>
<feature type="helix" evidence="35">
    <location>
        <begin position="2832"/>
        <end position="2838"/>
    </location>
</feature>
<feature type="helix" evidence="35">
    <location>
        <begin position="2841"/>
        <end position="2843"/>
    </location>
</feature>
<feature type="strand" evidence="35">
    <location>
        <begin position="2845"/>
        <end position="2847"/>
    </location>
</feature>
<feature type="strand" evidence="35">
    <location>
        <begin position="2856"/>
        <end position="2862"/>
    </location>
</feature>
<feature type="strand" evidence="35">
    <location>
        <begin position="2865"/>
        <end position="2872"/>
    </location>
</feature>
<feature type="strand" evidence="35">
    <location>
        <begin position="2879"/>
        <end position="2882"/>
    </location>
</feature>
<feature type="strand" evidence="35">
    <location>
        <begin position="2890"/>
        <end position="2897"/>
    </location>
</feature>
<feature type="strand" evidence="35">
    <location>
        <begin position="2900"/>
        <end position="2908"/>
    </location>
</feature>
<feature type="strand" evidence="35">
    <location>
        <begin position="2927"/>
        <end position="2932"/>
    </location>
</feature>
<feature type="strand" evidence="35">
    <location>
        <begin position="2935"/>
        <end position="2945"/>
    </location>
</feature>
<feature type="strand" evidence="35">
    <location>
        <begin position="2950"/>
        <end position="2954"/>
    </location>
</feature>
<feature type="helix" evidence="35">
    <location>
        <begin position="2961"/>
        <end position="2963"/>
    </location>
</feature>
<feature type="strand" evidence="35">
    <location>
        <begin position="2966"/>
        <end position="2969"/>
    </location>
</feature>
<feature type="helix" evidence="35">
    <location>
        <begin position="2980"/>
        <end position="2993"/>
    </location>
</feature>
<feature type="helix" evidence="35">
    <location>
        <begin position="3012"/>
        <end position="3019"/>
    </location>
</feature>
<feature type="turn" evidence="35">
    <location>
        <begin position="3020"/>
        <end position="3023"/>
    </location>
</feature>
<feature type="helix" evidence="35">
    <location>
        <begin position="3031"/>
        <end position="3039"/>
    </location>
</feature>
<feature type="helix" evidence="35">
    <location>
        <begin position="3044"/>
        <end position="3056"/>
    </location>
</feature>
<feature type="strand" evidence="35">
    <location>
        <begin position="3066"/>
        <end position="3068"/>
    </location>
</feature>
<feature type="helix" evidence="35">
    <location>
        <begin position="3075"/>
        <end position="3080"/>
    </location>
</feature>
<feature type="strand" evidence="36">
    <location>
        <begin position="3681"/>
        <end position="3693"/>
    </location>
</feature>
<feature type="helix" evidence="36">
    <location>
        <begin position="3694"/>
        <end position="3696"/>
    </location>
</feature>
<feature type="strand" evidence="36">
    <location>
        <begin position="3699"/>
        <end position="3708"/>
    </location>
</feature>
<feature type="strand" evidence="36">
    <location>
        <begin position="3711"/>
        <end position="3720"/>
    </location>
</feature>
<feature type="strand" evidence="36">
    <location>
        <begin position="3726"/>
        <end position="3730"/>
    </location>
</feature>
<feature type="strand" evidence="36">
    <location>
        <begin position="3736"/>
        <end position="3741"/>
    </location>
</feature>
<feature type="strand" evidence="36">
    <location>
        <begin position="3745"/>
        <end position="3751"/>
    </location>
</feature>
<feature type="strand" evidence="36">
    <location>
        <begin position="3754"/>
        <end position="3763"/>
    </location>
</feature>
<feature type="helix" evidence="36">
    <location>
        <begin position="3768"/>
        <end position="3778"/>
    </location>
</feature>
<feature type="helix" evidence="36">
    <location>
        <begin position="3779"/>
        <end position="3781"/>
    </location>
</feature>
<feature type="strand" evidence="36">
    <location>
        <begin position="3782"/>
        <end position="3784"/>
    </location>
</feature>
<dbReference type="EC" id="3.4.19.12" evidence="2"/>
<dbReference type="EC" id="3.4.22.-" evidence="2"/>
<dbReference type="EC" id="2.7.7.48"/>
<dbReference type="EC" id="2.7.7.50"/>
<dbReference type="EC" id="3.6.4.12" evidence="2"/>
<dbReference type="EC" id="3.6.4.13" evidence="2"/>
<dbReference type="EC" id="2.1.1.-"/>
<dbReference type="EC" id="3.1.13.-"/>
<dbReference type="EC" id="4.6.1.-" evidence="2"/>
<dbReference type="EC" id="2.1.1.57"/>
<dbReference type="EMBL" id="DQ834384">
    <property type="protein sequence ID" value="ABI26421.1"/>
    <property type="status" value="ALT_SEQ"/>
    <property type="molecule type" value="Genomic_RNA"/>
</dbReference>
<dbReference type="EMBL" id="DQ834384">
    <property type="protein sequence ID" value="ABI26422.1"/>
    <property type="status" value="ALT_SEQ"/>
    <property type="molecule type" value="Genomic_RNA"/>
</dbReference>
<dbReference type="EMBL" id="AY851295">
    <property type="protein sequence ID" value="AAW33784.1"/>
    <property type="status" value="ALT_SEQ"/>
    <property type="molecule type" value="Genomic_RNA"/>
</dbReference>
<dbReference type="EMBL" id="AY851295">
    <property type="protein sequence ID" value="AAW33785.1"/>
    <property type="status" value="ALT_SEQ"/>
    <property type="molecule type" value="Genomic_RNA"/>
</dbReference>
<dbReference type="PDB" id="2Q6D">
    <property type="method" value="X-ray"/>
    <property type="resolution" value="2.35 A"/>
    <property type="chains" value="A/B/C=2783-3088"/>
</dbReference>
<dbReference type="PDB" id="2Q6F">
    <property type="method" value="X-ray"/>
    <property type="resolution" value="2.00 A"/>
    <property type="chains" value="A/B=2783-3088"/>
</dbReference>
<dbReference type="PDB" id="5C94">
    <property type="method" value="X-ray"/>
    <property type="resolution" value="2.44 A"/>
    <property type="chains" value="A=3675-3785"/>
</dbReference>
<dbReference type="PDB" id="7F52">
    <property type="method" value="X-ray"/>
    <property type="resolution" value="2.56 A"/>
    <property type="chains" value="A/B=1-673"/>
</dbReference>
<dbReference type="PDB" id="9CPO">
    <property type="method" value="EM"/>
    <property type="resolution" value="3.50 A"/>
    <property type="chains" value="A=3938-4867, B/D=3470-3664, C=3383-3454"/>
</dbReference>
<dbReference type="PDBsum" id="2Q6D"/>
<dbReference type="PDBsum" id="2Q6F"/>
<dbReference type="PDBsum" id="5C94"/>
<dbReference type="PDBsum" id="7F52"/>
<dbReference type="PDBsum" id="9CPO"/>
<dbReference type="EMDB" id="EMD-45805"/>
<dbReference type="SMR" id="P0C6Y3"/>
<dbReference type="MEROPS" id="C30.002"/>
<dbReference type="SABIO-RK" id="P0C6Y3"/>
<dbReference type="EvolutionaryTrace" id="P0C6Y3"/>
<dbReference type="Proteomes" id="UP000007642">
    <property type="component" value="Genome"/>
</dbReference>
<dbReference type="Proteomes" id="UP000096468">
    <property type="component" value="Genome"/>
</dbReference>
<dbReference type="GO" id="GO:0044167">
    <property type="term" value="C:host cell endoplasmic reticulum membrane"/>
    <property type="evidence" value="ECO:0007669"/>
    <property type="project" value="UniProtKB-SubCell"/>
</dbReference>
<dbReference type="GO" id="GO:0044172">
    <property type="term" value="C:host cell endoplasmic reticulum-Golgi intermediate compartment"/>
    <property type="evidence" value="ECO:0007669"/>
    <property type="project" value="UniProtKB-SubCell"/>
</dbReference>
<dbReference type="GO" id="GO:0044220">
    <property type="term" value="C:host cell perinuclear region of cytoplasm"/>
    <property type="evidence" value="ECO:0007669"/>
    <property type="project" value="UniProtKB-SubCell"/>
</dbReference>
<dbReference type="GO" id="GO:0016020">
    <property type="term" value="C:membrane"/>
    <property type="evidence" value="ECO:0007669"/>
    <property type="project" value="UniProtKB-KW"/>
</dbReference>
<dbReference type="GO" id="GO:0000175">
    <property type="term" value="F:3'-5'-RNA exonuclease activity"/>
    <property type="evidence" value="ECO:0007669"/>
    <property type="project" value="InterPro"/>
</dbReference>
<dbReference type="GO" id="GO:0043139">
    <property type="term" value="F:5'-3' DNA helicase activity"/>
    <property type="evidence" value="ECO:0007669"/>
    <property type="project" value="TreeGrafter"/>
</dbReference>
<dbReference type="GO" id="GO:0005524">
    <property type="term" value="F:ATP binding"/>
    <property type="evidence" value="ECO:0007669"/>
    <property type="project" value="UniProtKB-KW"/>
</dbReference>
<dbReference type="GO" id="GO:0016887">
    <property type="term" value="F:ATP hydrolysis activity"/>
    <property type="evidence" value="ECO:0007669"/>
    <property type="project" value="RHEA"/>
</dbReference>
<dbReference type="GO" id="GO:0004197">
    <property type="term" value="F:cysteine-type endopeptidase activity"/>
    <property type="evidence" value="ECO:0007669"/>
    <property type="project" value="InterPro"/>
</dbReference>
<dbReference type="GO" id="GO:0004519">
    <property type="term" value="F:endonuclease activity"/>
    <property type="evidence" value="ECO:0007669"/>
    <property type="project" value="UniProtKB-KW"/>
</dbReference>
<dbReference type="GO" id="GO:0016829">
    <property type="term" value="F:lyase activity"/>
    <property type="evidence" value="ECO:0007669"/>
    <property type="project" value="UniProtKB-KW"/>
</dbReference>
<dbReference type="GO" id="GO:0004483">
    <property type="term" value="F:mRNA (nucleoside-2'-O-)-methyltransferase activity"/>
    <property type="evidence" value="ECO:0007669"/>
    <property type="project" value="InterPro"/>
</dbReference>
<dbReference type="GO" id="GO:0004482">
    <property type="term" value="F:mRNA 5'-cap (guanine-N7-)-methyltransferase activity"/>
    <property type="evidence" value="ECO:0007669"/>
    <property type="project" value="InterPro"/>
</dbReference>
<dbReference type="GO" id="GO:0008242">
    <property type="term" value="F:omega peptidase activity"/>
    <property type="evidence" value="ECO:0007669"/>
    <property type="project" value="InterPro"/>
</dbReference>
<dbReference type="GO" id="GO:0003723">
    <property type="term" value="F:RNA binding"/>
    <property type="evidence" value="ECO:0007669"/>
    <property type="project" value="UniProtKB-KW"/>
</dbReference>
<dbReference type="GO" id="GO:0003724">
    <property type="term" value="F:RNA helicase activity"/>
    <property type="evidence" value="ECO:0007669"/>
    <property type="project" value="UniProtKB-EC"/>
</dbReference>
<dbReference type="GO" id="GO:0003968">
    <property type="term" value="F:RNA-directed RNA polymerase activity"/>
    <property type="evidence" value="ECO:0007669"/>
    <property type="project" value="UniProtKB-KW"/>
</dbReference>
<dbReference type="GO" id="GO:0008270">
    <property type="term" value="F:zinc ion binding"/>
    <property type="evidence" value="ECO:0007669"/>
    <property type="project" value="UniProtKB-KW"/>
</dbReference>
<dbReference type="GO" id="GO:0006351">
    <property type="term" value="P:DNA-templated transcription"/>
    <property type="evidence" value="ECO:0007669"/>
    <property type="project" value="InterPro"/>
</dbReference>
<dbReference type="GO" id="GO:0006508">
    <property type="term" value="P:proteolysis"/>
    <property type="evidence" value="ECO:0007669"/>
    <property type="project" value="UniProtKB-KW"/>
</dbReference>
<dbReference type="GO" id="GO:0010506">
    <property type="term" value="P:regulation of autophagy"/>
    <property type="evidence" value="ECO:0007669"/>
    <property type="project" value="InterPro"/>
</dbReference>
<dbReference type="GO" id="GO:0039520">
    <property type="term" value="P:symbiont-mediated activation of host autophagy"/>
    <property type="evidence" value="ECO:0007669"/>
    <property type="project" value="UniProtKB-KW"/>
</dbReference>
<dbReference type="GO" id="GO:0019082">
    <property type="term" value="P:viral protein processing"/>
    <property type="evidence" value="ECO:0007669"/>
    <property type="project" value="InterPro"/>
</dbReference>
<dbReference type="GO" id="GO:0039694">
    <property type="term" value="P:viral RNA genome replication"/>
    <property type="evidence" value="ECO:0007669"/>
    <property type="project" value="InterPro"/>
</dbReference>
<dbReference type="GO" id="GO:0075523">
    <property type="term" value="P:viral translational frameshifting"/>
    <property type="evidence" value="ECO:0007669"/>
    <property type="project" value="UniProtKB-KW"/>
</dbReference>
<dbReference type="CDD" id="cd21409">
    <property type="entry name" value="1B_cv_Nsp13-like"/>
    <property type="match status" value="1"/>
</dbReference>
<dbReference type="CDD" id="cd23529">
    <property type="entry name" value="capping_2-OMTase_gammaCoV_Nsp16"/>
    <property type="match status" value="1"/>
</dbReference>
<dbReference type="CDD" id="cd21512">
    <property type="entry name" value="cv_gamma-delta_Nsp2_IBV-like"/>
    <property type="match status" value="1"/>
</dbReference>
<dbReference type="CDD" id="cd21473">
    <property type="entry name" value="cv_Nsp4_TM"/>
    <property type="match status" value="1"/>
</dbReference>
<dbReference type="CDD" id="cd21559">
    <property type="entry name" value="gammaCoV-Nsp6"/>
    <property type="match status" value="1"/>
</dbReference>
<dbReference type="CDD" id="cd21902">
    <property type="entry name" value="gammaCoV_Nsp10"/>
    <property type="match status" value="1"/>
</dbReference>
<dbReference type="CDD" id="cd21720">
    <property type="entry name" value="gammaCoV_Nsp13-helicase"/>
    <property type="match status" value="1"/>
</dbReference>
<dbReference type="CDD" id="cd21658">
    <property type="entry name" value="gammaCoV_Nsp14"/>
    <property type="match status" value="1"/>
</dbReference>
<dbReference type="CDD" id="cd21667">
    <property type="entry name" value="gammaCoV_Nsp5_Mpro"/>
    <property type="match status" value="1"/>
</dbReference>
<dbReference type="CDD" id="cd21828">
    <property type="entry name" value="gammaCoV_Nsp7"/>
    <property type="match status" value="1"/>
</dbReference>
<dbReference type="CDD" id="cd21832">
    <property type="entry name" value="gammaCoV_Nsp8"/>
    <property type="match status" value="1"/>
</dbReference>
<dbReference type="CDD" id="cd21899">
    <property type="entry name" value="gammaCoV_Nsp9"/>
    <property type="match status" value="1"/>
</dbReference>
<dbReference type="CDD" id="cd21733">
    <property type="entry name" value="gammaCoV_PLPro"/>
    <property type="match status" value="1"/>
</dbReference>
<dbReference type="CDD" id="cd21587">
    <property type="entry name" value="gammaCoV_RdRp"/>
    <property type="match status" value="1"/>
</dbReference>
<dbReference type="CDD" id="cd21168">
    <property type="entry name" value="M_gcv_Nsp15-like"/>
    <property type="match status" value="1"/>
</dbReference>
<dbReference type="CDD" id="cd21557">
    <property type="entry name" value="Macro_X_Nsp3-like"/>
    <property type="match status" value="1"/>
</dbReference>
<dbReference type="CDD" id="cd22650">
    <property type="entry name" value="NTD_gammaCoV_Nsp15-like"/>
    <property type="match status" value="1"/>
</dbReference>
<dbReference type="CDD" id="cd21689">
    <property type="entry name" value="stalk_CoV_Nsp13-like"/>
    <property type="match status" value="1"/>
</dbReference>
<dbReference type="CDD" id="cd21710">
    <property type="entry name" value="TM_Y_gammaCoV_Nsp3_C"/>
    <property type="match status" value="1"/>
</dbReference>
<dbReference type="CDD" id="cd21467">
    <property type="entry name" value="Ubl1_cv_Nsp3_N-like"/>
    <property type="match status" value="1"/>
</dbReference>
<dbReference type="CDD" id="cd21401">
    <property type="entry name" value="ZBD_cv_Nsp13-like"/>
    <property type="match status" value="1"/>
</dbReference>
<dbReference type="Gene3D" id="1.10.8.1190">
    <property type="match status" value="1"/>
</dbReference>
<dbReference type="Gene3D" id="2.60.120.1680">
    <property type="match status" value="1"/>
</dbReference>
<dbReference type="Gene3D" id="3.40.50.11580">
    <property type="match status" value="1"/>
</dbReference>
<dbReference type="Gene3D" id="6.10.250.2820">
    <property type="match status" value="1"/>
</dbReference>
<dbReference type="Gene3D" id="1.10.150.420">
    <property type="entry name" value="Coronavirus nonstructural protein 4 C-terminus"/>
    <property type="match status" value="1"/>
</dbReference>
<dbReference type="Gene3D" id="3.40.220.10">
    <property type="entry name" value="Leucine Aminopeptidase, subunit E, domain 1"/>
    <property type="match status" value="1"/>
</dbReference>
<dbReference type="Gene3D" id="1.10.1840.10">
    <property type="entry name" value="main proteinase (3clpro) structure, domain 3"/>
    <property type="match status" value="1"/>
</dbReference>
<dbReference type="Gene3D" id="3.30.160.820">
    <property type="entry name" value="Nsp15 N-terminal domain-like"/>
    <property type="match status" value="1"/>
</dbReference>
<dbReference type="Gene3D" id="1.10.8.370">
    <property type="entry name" value="nsp7 replicase"/>
    <property type="match status" value="1"/>
</dbReference>
<dbReference type="Gene3D" id="3.30.70.3540">
    <property type="entry name" value="Nsp8 replicase, head domain"/>
    <property type="match status" value="1"/>
</dbReference>
<dbReference type="Gene3D" id="3.40.50.300">
    <property type="entry name" value="P-loop containing nucleotide triphosphate hydrolases"/>
    <property type="match status" value="2"/>
</dbReference>
<dbReference type="Gene3D" id="2.40.10.250">
    <property type="entry name" value="Replicase NSP9"/>
    <property type="match status" value="1"/>
</dbReference>
<dbReference type="Gene3D" id="2.40.10.10">
    <property type="entry name" value="Trypsin-like serine proteases"/>
    <property type="match status" value="2"/>
</dbReference>
<dbReference type="Gene3D" id="3.40.50.150">
    <property type="entry name" value="Vaccinia Virus protein VP39"/>
    <property type="match status" value="1"/>
</dbReference>
<dbReference type="InterPro" id="IPR027351">
    <property type="entry name" value="(+)RNA_virus_helicase_core_dom"/>
</dbReference>
<dbReference type="InterPro" id="IPR046440">
    <property type="entry name" value="AV_NSP11N_COV_NSP15M"/>
</dbReference>
<dbReference type="InterPro" id="IPR050534">
    <property type="entry name" value="Coronavir_polyprotein_1ab"/>
</dbReference>
<dbReference type="InterPro" id="IPR043608">
    <property type="entry name" value="CoV_NSP15_M"/>
</dbReference>
<dbReference type="InterPro" id="IPR043606">
    <property type="entry name" value="CoV_NSP15_N"/>
</dbReference>
<dbReference type="InterPro" id="IPR049894">
    <property type="entry name" value="COV_NSP3_3ECTO"/>
</dbReference>
<dbReference type="InterPro" id="IPR043611">
    <property type="entry name" value="CoV_NSP3_C"/>
</dbReference>
<dbReference type="InterPro" id="IPR047566">
    <property type="entry name" value="CoV_NSP3_Y"/>
</dbReference>
<dbReference type="InterPro" id="IPR032505">
    <property type="entry name" value="CoV_NSP4_C"/>
</dbReference>
<dbReference type="InterPro" id="IPR043612">
    <property type="entry name" value="CoV_NSP4_N"/>
</dbReference>
<dbReference type="InterPro" id="IPR043502">
    <property type="entry name" value="DNA/RNA_pol_sf"/>
</dbReference>
<dbReference type="InterPro" id="IPR037227">
    <property type="entry name" value="EndoU-like"/>
</dbReference>
<dbReference type="InterPro" id="IPR002589">
    <property type="entry name" value="Macro_dom"/>
</dbReference>
<dbReference type="InterPro" id="IPR043472">
    <property type="entry name" value="Macro_dom-like"/>
</dbReference>
<dbReference type="InterPro" id="IPR044371">
    <property type="entry name" value="Macro_X_NSP3-like"/>
</dbReference>
<dbReference type="InterPro" id="IPR046435">
    <property type="entry name" value="N7_MTase_CoV"/>
</dbReference>
<dbReference type="InterPro" id="IPR043609">
    <property type="entry name" value="NendoU_nidovirus"/>
</dbReference>
<dbReference type="InterPro" id="IPR044863">
    <property type="entry name" value="NIRAN"/>
</dbReference>
<dbReference type="InterPro" id="IPR046438">
    <property type="entry name" value="NIV_2_O_MTASE"/>
</dbReference>
<dbReference type="InterPro" id="IPR046436">
    <property type="entry name" value="NIV_EXON"/>
</dbReference>
<dbReference type="InterPro" id="IPR036333">
    <property type="entry name" value="NSP10_sf_CoV"/>
</dbReference>
<dbReference type="InterPro" id="IPR047570">
    <property type="entry name" value="NSP12_IF_CoV"/>
</dbReference>
<dbReference type="InterPro" id="IPR044343">
    <property type="entry name" value="NSP13_1B_dom_CoV"/>
</dbReference>
<dbReference type="InterPro" id="IPR048673">
    <property type="entry name" value="NSP13_stalk_CoV"/>
</dbReference>
<dbReference type="InterPro" id="IPR048672">
    <property type="entry name" value="NSP13_ZBD_CoV"/>
</dbReference>
<dbReference type="InterPro" id="IPR027352">
    <property type="entry name" value="NSP13_ZBD_CoV-like"/>
</dbReference>
<dbReference type="InterPro" id="IPR009466">
    <property type="entry name" value="NSP14_CoV"/>
</dbReference>
<dbReference type="InterPro" id="IPR044316">
    <property type="entry name" value="NSP14_gammaCoV"/>
</dbReference>
<dbReference type="InterPro" id="IPR044328">
    <property type="entry name" value="NSP15_gammaCoV_N"/>
</dbReference>
<dbReference type="InterPro" id="IPR044325">
    <property type="entry name" value="NSP15_M_gammaCoV"/>
</dbReference>
<dbReference type="InterPro" id="IPR043174">
    <property type="entry name" value="NSP15_middle_sf"/>
</dbReference>
<dbReference type="InterPro" id="IPR042515">
    <property type="entry name" value="NSP15_N_CoV"/>
</dbReference>
<dbReference type="InterPro" id="IPR009461">
    <property type="entry name" value="NSP16_CoV-like"/>
</dbReference>
<dbReference type="InterPro" id="IPR040795">
    <property type="entry name" value="NSP2_gammaCoV"/>
</dbReference>
<dbReference type="InterPro" id="IPR044383">
    <property type="entry name" value="NSP2_IBV-like"/>
</dbReference>
<dbReference type="InterPro" id="IPR044357">
    <property type="entry name" value="NSP3_Ubl1_dom_CoV"/>
</dbReference>
<dbReference type="InterPro" id="IPR044353">
    <property type="entry name" value="Nsp3_Ubl2_dom_CoV"/>
</dbReference>
<dbReference type="InterPro" id="IPR038123">
    <property type="entry name" value="NSP4_C_sf_CoV"/>
</dbReference>
<dbReference type="InterPro" id="IPR044308">
    <property type="entry name" value="NSP5_Mpro_GammaCoV"/>
</dbReference>
<dbReference type="InterPro" id="IPR043610">
    <property type="entry name" value="NSP6_CoV"/>
</dbReference>
<dbReference type="InterPro" id="IPR044368">
    <property type="entry name" value="NSP6_gammaCoV"/>
</dbReference>
<dbReference type="InterPro" id="IPR014828">
    <property type="entry name" value="NSP7_CoV"/>
</dbReference>
<dbReference type="InterPro" id="IPR037204">
    <property type="entry name" value="NSP7_sf_CoV"/>
</dbReference>
<dbReference type="InterPro" id="IPR014829">
    <property type="entry name" value="NSP8_CoV"/>
</dbReference>
<dbReference type="InterPro" id="IPR037230">
    <property type="entry name" value="NSP8_sf_CoV"/>
</dbReference>
<dbReference type="InterPro" id="IPR014822">
    <property type="entry name" value="NSP9_CoV"/>
</dbReference>
<dbReference type="InterPro" id="IPR036499">
    <property type="entry name" value="NSP9_sf_CoV"/>
</dbReference>
<dbReference type="InterPro" id="IPR027417">
    <property type="entry name" value="P-loop_NTPase"/>
</dbReference>
<dbReference type="InterPro" id="IPR013016">
    <property type="entry name" value="Peptidase_C16_CoV"/>
</dbReference>
<dbReference type="InterPro" id="IPR008740">
    <property type="entry name" value="Peptidase_C30_CoV"/>
</dbReference>
<dbReference type="InterPro" id="IPR043477">
    <property type="entry name" value="Peptidase_C30_dom3_CoV"/>
</dbReference>
<dbReference type="InterPro" id="IPR009003">
    <property type="entry name" value="Peptidase_S1_PA"/>
</dbReference>
<dbReference type="InterPro" id="IPR043504">
    <property type="entry name" value="Peptidase_S1_PA_chymotrypsin"/>
</dbReference>
<dbReference type="InterPro" id="IPR043503">
    <property type="entry name" value="PLpro_palm_finger_dom_CoV"/>
</dbReference>
<dbReference type="InterPro" id="IPR043178">
    <property type="entry name" value="PLpro_thumb_sf_CoV"/>
</dbReference>
<dbReference type="InterPro" id="IPR046441">
    <property type="entry name" value="RdRp_CoV"/>
</dbReference>
<dbReference type="InterPro" id="IPR044358">
    <property type="entry name" value="RdRp_gammaCoV"/>
</dbReference>
<dbReference type="InterPro" id="IPR009469">
    <property type="entry name" value="RdRp_N_CoV"/>
</dbReference>
<dbReference type="InterPro" id="IPR001205">
    <property type="entry name" value="RNA-dir_pol_C"/>
</dbReference>
<dbReference type="InterPro" id="IPR007094">
    <property type="entry name" value="RNA-dir_pol_PSvirus"/>
</dbReference>
<dbReference type="InterPro" id="IPR018995">
    <property type="entry name" value="RNA_synth_NSP10_CoV"/>
</dbReference>
<dbReference type="InterPro" id="IPR029063">
    <property type="entry name" value="SAM-dependent_MTases_sf"/>
</dbReference>
<dbReference type="PANTHER" id="PTHR43788">
    <property type="entry name" value="DNA2/NAM7 HELICASE FAMILY MEMBER"/>
    <property type="match status" value="1"/>
</dbReference>
<dbReference type="PANTHER" id="PTHR43788:SF16">
    <property type="entry name" value="HELICASE WITH ZINC FINGER 2"/>
    <property type="match status" value="1"/>
</dbReference>
<dbReference type="Pfam" id="PF06471">
    <property type="entry name" value="CoV_ExoN"/>
    <property type="match status" value="1"/>
</dbReference>
<dbReference type="Pfam" id="PF06460">
    <property type="entry name" value="CoV_Methyltr_2"/>
    <property type="match status" value="1"/>
</dbReference>
<dbReference type="Pfam" id="PF09401">
    <property type="entry name" value="CoV_NSP10"/>
    <property type="match status" value="1"/>
</dbReference>
<dbReference type="Pfam" id="PF20631">
    <property type="entry name" value="CoV_NSP13_1B"/>
    <property type="match status" value="1"/>
</dbReference>
<dbReference type="Pfam" id="PF20633">
    <property type="entry name" value="CoV_NSP13_stalk"/>
    <property type="match status" value="1"/>
</dbReference>
<dbReference type="Pfam" id="PF20632">
    <property type="entry name" value="CoV_NSP13_ZBD"/>
    <property type="match status" value="1"/>
</dbReference>
<dbReference type="Pfam" id="PF19215">
    <property type="entry name" value="CoV_NSP15_C"/>
    <property type="match status" value="1"/>
</dbReference>
<dbReference type="Pfam" id="PF19216">
    <property type="entry name" value="CoV_NSP15_M"/>
    <property type="match status" value="1"/>
</dbReference>
<dbReference type="Pfam" id="PF19219">
    <property type="entry name" value="CoV_NSP15_N"/>
    <property type="match status" value="1"/>
</dbReference>
<dbReference type="Pfam" id="PF19218">
    <property type="entry name" value="CoV_NSP3_C"/>
    <property type="match status" value="1"/>
</dbReference>
<dbReference type="Pfam" id="PF16348">
    <property type="entry name" value="CoV_NSP4_C"/>
    <property type="match status" value="1"/>
</dbReference>
<dbReference type="Pfam" id="PF19217">
    <property type="entry name" value="CoV_NSP4_N"/>
    <property type="match status" value="1"/>
</dbReference>
<dbReference type="Pfam" id="PF19213">
    <property type="entry name" value="CoV_NSP6"/>
    <property type="match status" value="1"/>
</dbReference>
<dbReference type="Pfam" id="PF08716">
    <property type="entry name" value="CoV_NSP7"/>
    <property type="match status" value="1"/>
</dbReference>
<dbReference type="Pfam" id="PF08717">
    <property type="entry name" value="CoV_NSP8"/>
    <property type="match status" value="1"/>
</dbReference>
<dbReference type="Pfam" id="PF08710">
    <property type="entry name" value="CoV_NSP9"/>
    <property type="match status" value="1"/>
</dbReference>
<dbReference type="Pfam" id="PF08715">
    <property type="entry name" value="CoV_peptidase"/>
    <property type="match status" value="1"/>
</dbReference>
<dbReference type="Pfam" id="PF06478">
    <property type="entry name" value="CoV_RPol_N"/>
    <property type="match status" value="1"/>
</dbReference>
<dbReference type="Pfam" id="PF01661">
    <property type="entry name" value="Macro"/>
    <property type="match status" value="1"/>
</dbReference>
<dbReference type="Pfam" id="PF17896">
    <property type="entry name" value="NSP2_gammaCoV"/>
    <property type="match status" value="1"/>
</dbReference>
<dbReference type="Pfam" id="PF05409">
    <property type="entry name" value="Peptidase_C30"/>
    <property type="match status" value="1"/>
</dbReference>
<dbReference type="Pfam" id="PF00680">
    <property type="entry name" value="RdRP_1"/>
    <property type="match status" value="1"/>
</dbReference>
<dbReference type="Pfam" id="PF01443">
    <property type="entry name" value="Viral_helicase1"/>
    <property type="match status" value="1"/>
</dbReference>
<dbReference type="SMART" id="SM00506">
    <property type="entry name" value="A1pp"/>
    <property type="match status" value="1"/>
</dbReference>
<dbReference type="SUPFAM" id="SSF144246">
    <property type="entry name" value="Coronavirus NSP10-like"/>
    <property type="match status" value="1"/>
</dbReference>
<dbReference type="SUPFAM" id="SSF140367">
    <property type="entry name" value="Coronavirus NSP7-like"/>
    <property type="match status" value="1"/>
</dbReference>
<dbReference type="SUPFAM" id="SSF143076">
    <property type="entry name" value="Coronavirus NSP8-like"/>
    <property type="match status" value="1"/>
</dbReference>
<dbReference type="SUPFAM" id="SSF56672">
    <property type="entry name" value="DNA/RNA polymerases"/>
    <property type="match status" value="1"/>
</dbReference>
<dbReference type="SUPFAM" id="SSF142877">
    <property type="entry name" value="EndoU-like"/>
    <property type="match status" value="1"/>
</dbReference>
<dbReference type="SUPFAM" id="SSF52949">
    <property type="entry name" value="Macro domain-like"/>
    <property type="match status" value="1"/>
</dbReference>
<dbReference type="SUPFAM" id="SSF52540">
    <property type="entry name" value="P-loop containing nucleoside triphosphate hydrolases"/>
    <property type="match status" value="1"/>
</dbReference>
<dbReference type="SUPFAM" id="SSF101816">
    <property type="entry name" value="Replicase NSP9"/>
    <property type="match status" value="1"/>
</dbReference>
<dbReference type="SUPFAM" id="SSF53335">
    <property type="entry name" value="S-adenosyl-L-methionine-dependent methyltransferases"/>
    <property type="match status" value="1"/>
</dbReference>
<dbReference type="SUPFAM" id="SSF50494">
    <property type="entry name" value="Trypsin-like serine proteases"/>
    <property type="match status" value="1"/>
</dbReference>
<dbReference type="PROSITE" id="PS51961">
    <property type="entry name" value="AV_NSP11N_COV_NSP15M"/>
    <property type="match status" value="1"/>
</dbReference>
<dbReference type="PROSITE" id="PS51993">
    <property type="entry name" value="COV_3ECTO"/>
    <property type="match status" value="1"/>
</dbReference>
<dbReference type="PROSITE" id="PS51952">
    <property type="entry name" value="COV_EXON_MTASE_COACT"/>
    <property type="match status" value="1"/>
</dbReference>
<dbReference type="PROSITE" id="PS51954">
    <property type="entry name" value="COV_N7_MTASE"/>
    <property type="match status" value="1"/>
</dbReference>
<dbReference type="PROSITE" id="PS52000">
    <property type="entry name" value="COV_NSP12_IF"/>
    <property type="match status" value="1"/>
</dbReference>
<dbReference type="PROSITE" id="PS51948">
    <property type="entry name" value="COV_NSP12_RDRP"/>
    <property type="match status" value="1"/>
</dbReference>
<dbReference type="PROSITE" id="PS51960">
    <property type="entry name" value="COV_NSP15_NTD"/>
    <property type="match status" value="1"/>
</dbReference>
<dbReference type="PROSITE" id="PS51992">
    <property type="entry name" value="COV_NSP3_Y"/>
    <property type="match status" value="1"/>
</dbReference>
<dbReference type="PROSITE" id="PS51943">
    <property type="entry name" value="COV_NSP3A_UBL"/>
    <property type="match status" value="1"/>
</dbReference>
<dbReference type="PROSITE" id="PS51944">
    <property type="entry name" value="COV_NSP3D_UBL"/>
    <property type="match status" value="1"/>
</dbReference>
<dbReference type="PROSITE" id="PS51946">
    <property type="entry name" value="COV_NSP4C"/>
    <property type="match status" value="1"/>
</dbReference>
<dbReference type="PROSITE" id="PS51949">
    <property type="entry name" value="COV_NSP7"/>
    <property type="match status" value="1"/>
</dbReference>
<dbReference type="PROSITE" id="PS51950">
    <property type="entry name" value="COV_NSP8"/>
    <property type="match status" value="1"/>
</dbReference>
<dbReference type="PROSITE" id="PS51951">
    <property type="entry name" value="COV_NSP9_SSRNA_BD"/>
    <property type="match status" value="1"/>
</dbReference>
<dbReference type="PROSITE" id="PS51653">
    <property type="entry name" value="CV_ZBD"/>
    <property type="match status" value="1"/>
</dbReference>
<dbReference type="PROSITE" id="PS51442">
    <property type="entry name" value="M_PRO"/>
    <property type="match status" value="1"/>
</dbReference>
<dbReference type="PROSITE" id="PS51154">
    <property type="entry name" value="MACRO"/>
    <property type="match status" value="1"/>
</dbReference>
<dbReference type="PROSITE" id="PS51958">
    <property type="entry name" value="NENDOU"/>
    <property type="match status" value="1"/>
</dbReference>
<dbReference type="PROSITE" id="PS51947">
    <property type="entry name" value="NIRAN"/>
    <property type="match status" value="1"/>
</dbReference>
<dbReference type="PROSITE" id="PS51955">
    <property type="entry name" value="NIV_2_O_MTASE"/>
    <property type="match status" value="1"/>
</dbReference>
<dbReference type="PROSITE" id="PS51953">
    <property type="entry name" value="NIV_EXON"/>
    <property type="match status" value="1"/>
</dbReference>
<dbReference type="PROSITE" id="PS51124">
    <property type="entry name" value="PEPTIDASE_C16"/>
    <property type="match status" value="1"/>
</dbReference>
<dbReference type="PROSITE" id="PS51657">
    <property type="entry name" value="PSRV_HELICASE"/>
    <property type="match status" value="1"/>
</dbReference>
<dbReference type="PROSITE" id="PS50507">
    <property type="entry name" value="RDRP_SSRNA_POS"/>
    <property type="match status" value="1"/>
</dbReference>
<organismHost>
    <name type="scientific">Gallus gallus</name>
    <name type="common">Chicken</name>
    <dbReference type="NCBI Taxonomy" id="9031"/>
</organismHost>
<gene>
    <name type="primary">rep</name>
    <name type="ORF">1a-1b</name>
</gene>
<sequence length="6631" mass="744412">MASSLKQGVSPKLRDVILVSKDIPEQLCDALFFYTSHNPKDYADAFAVRQKFDRNLQTGKQFKFETVCGLFLLKGVDKITPGVPAKVLKATSKLADLEDIFGVSPFARKYRELLKTACQWSLTVETLDARAQTLDEIFDPTEILWLQVAAKIQVSAMAMRRLVGEVTAKVMDALGSNMSALFQIFKQQIVRIFQKALAIFENVSELPQRIAALKMAFAKCAKSITVVVMERTLVVREFAGTCLASINGAVAKFFEELPNGFMGAKIFTTLAFFREAAVKIVDNIPNAPRGTKGFEVVGNAKGTQVVVRGMRNDLTLLDQKAEIPVESEGWSAILGGHLCYVFKSGDRFYAAPLSGNFALHDVHCCERVVCLSDGVTPEINDGLILAAIYSSFSVAELVAAIKRGEPFKFLGHKFVYAKDAAVSFTLAKAATIADVLKLFQSARVKVEDVWSSLTEKSFEFWRLAYGKVRNLEEFVKTCFCKAQMAIVILATVLGEGIWHLVSQVIYKVGGLFTKVVDFCEKYWKGFCAQLKRAKLIVTETLCVLKGVAQHCFQLLLDAIQFMYKSFKKCALGRIHGDLLFWKGGVHKIIQEGDEIWFDAIDSIDVEDLGVVQEKLIDFDVCDNVTLPENQPGHMVQIEDDGKNYMFFRFKKDENIYYTPMSQLGAINVVCKAGGKTVTFGETTVQEIPPPDVVFIKVSIECCGEPWNTIFKKAYKEPIEVETDLTVEQLLSVVYEKMCDDLKLFPEAPEPPPFENVTLVDKNGKDLDCIKSCHLIYRDYESDDDIEEEDAEECDTDSGDAEECDTNLECEEEDEDTKVLALIQDPASNKYPLPLDDDYSVYNGCIVHKDALDVVNLPSGEETFVVNNCFEGAVKALPQKVIDVLGDWGEAVDAQEQLCQQESTRVISEKSVEGFTGSCDAMAEQAIVEEQEIVPVVEQSQDVVVFTPADLEVVKETAEEVDEFILISAVPKEEVVSQEKEEPQVEQEPTLVVKAQREKKAKKFKVKPATCEKPKFLEYKTCVGDLAVVIAKALDEFKEFCIVNAANEHMSHGGGVAKAIADFCGPDFVEYCADYVKKHGPQQKLVTPSFVKGIQCVNNVVGPRHGDSNLREKLVAAYKSVLVGGVVNYVVPVLSSGIFGVDFKISIDAMREAFKGCAIRVLLFSLSQEHIDYFDATCKQKTIYLTEDGVKYRSVVLKPGDSLGQFGQVFARNKVVFSADDVEDKEILFIPTTDKTILEYYGLDAQKYVTYLQTLAQKWDVQYRDNFVILEWRDGNCWISSAIVLLQAAKIRFKGFLAEAWAKLLGGDPTDFVAWCYASCNAKVGDFSDANWLLANLAEHFDADYTNALLKKCVSCNCGVKSYELRGLEACIQPVRAPNLLHFKTQYSNCPTCGASSTDEVIEASLPYLLLFATDGPATVDCDENAVGTVVFIGSTNSGHCYTQADGKAFDNLAKDRKFGRKSPYITAMYTRFSLRSENPLLVVEHSKGKAKVVKEDVSNLATSSKASFDDLTDFEQWYDSNIYESLKVQETPDNLDEYVSFTTKEDSKLPLTLKVRGIKSVVDFRSKDGFTYKLTPDTDENSKTPVYYPVLDSISLRAIWVEGSANFVVGHPNYYSKSLRIPTFWENAESFVKMGYKIDGVTMGLWRAEHLNKPNLERIFNIAKKAIVGSSVVTTQCGKILVKAATYVADKVGDGVVRNITDRIKGLCGFTRGHFEKKMSLQFLKTLVFFFFYFLKASSKSLVSSYKIVLCKVVFATLLIVWFIYTSNPVVFTGIRVLDFLFEGSLCGPYNDYGKDSFDVLRYCAGDFTCRVCLHDRDSLHLYKHAYSVEQIYKDAASGINFNWNWLYLVFLILFVKPVAGFVIICYCVKYLVLSSTVLQTGVGFLDWFVKTVFTHFNFMGAGFYFWLFYKIYVQVHHILYCKDVTCEVCKRVARSNRQEVSVVVGGRKQIVHVYTNSGYNFCKRHNWYCRNCDDYGHQNTFMSPEVAGELSEKLKRHVKPTAYAYHVVYEACVVDDFVNLKYKAAIPGKDNASSAVKCFSVTDFLKKAVFLKEALKCEQISNDGFIVCNTQSAHALEEAKNAAVYYAQYLCKPILILDQALYEQLIVEPVSKSVIDKVCSILSNIISVDTAALNYKAGTLRDALLSITKDEEAVDMAIFCHNHEVEYTGDGFTNVIPSYGMDTDKLTPRDRGFLINADASIANLRVKNAPPVVWKFSDLIKLSDSCLKYLISATVKSGGRFFITKSGAKQVISCHTQKLLVEKKAGGVINNTFKWFMSCFKWLFVFYILFTACCLGYYYMEMNKSFVHPMYDVNSTLHVEGFKVIDKGVIREIVSEDNCFSNKFVNFDAFWGKSYENNKNCPIVTVVIDGDGTVAVGVPGFVSWVMDGVMFVHMTQTDRRPWYIPTWFNREIVGYTQDSIITEGSFYTSIALFSARCLYLTASNTPQLYCFNGDNDAPGALPFGSIIPHRVYFQPNGVRLIVPQQILHTPYIVKFVSDSYCRGSVCEYTKPGYCVSLDSQWVLFNDEYISKPGVFCGSTVRELMFNMVSTFFTGVNPNIYIQLATMFLILVVIVLIFAMVIKFQGVFKAYATIVFTIMLVWVINAFVLCVHSYNSVLAVILLVLYCYASMVTSRNTAIIMHCWLVFTFGLIVPTWLACCYLGFILYMYTPLVFWCYGTTKNTRKLYDGNEFVGNYDLAAKSTFVIRGTEFVKLTNEIGDKFEAYLSAYARLKYYSGTGSEQDYLQACRAWLAYALDQYRNSGVEVVYTPPRYSIGVSRLQAGFKKLVSPSSAVEKCIVSVSYRGNNLNGLWLGDSIYCPRHVLGKFSGDQWGDVLNLANNHEFEVVTQNGVTLNVVSRRLKGAVLILQTAVANAETPKYKFVKANCGDSFTIACSYGGTVIGLYPVTMRSNGTIRASFLAGACGSVGFNIEKGVVNFFYMHHLELPNALHTGTDLMGEFYGGYVDEEVAQRVPPDNLVTNNIVAWLYAAIISVKESSFSQPKWLESTTVSIEDYNRWASDNGFTPFSTSTAITKLSAITGVDVCKLLRTIMVKSAQWGSDPILGQYNFEDELTPESVFNQVGGVRLQSSFVRKATSWFWSRCVLACFLFVLCAIVLFTAVPLKFYVHAAVILLMAVLFISFTVKHVMAYMDTFLLPTLITVIIGVCAEVPFIYNTLISQVVIFLSQWYDPVVFDTMVPWMLLPLVLYTAFKCVQGCYMNSFNTSLLMLYQFMKLGFVIYTSSNTLTAYTEGNWELFFELVHTIVLANVSSNSLIGLIVFKCAKWMLYYCNATYFNNYVLMAVMVNGIGWLCTCYFGLYWWVNKVFGLTLGKYNFKVSVDQYRYMCLHKVNPPKTVWEVFTTNILIQGIGGDRVLPIATVQSKLSDVKCTTVVLMQLLTKLNVEANSKMHAYLVELHNKILASDDVGECMDNLLGMLITLFCIDSTIDLGEYCDDILKRSTVLQSVTQEFSHIPSYAEYERAKSIYEKVLADSKNGGVTQQELAAYRKAANIAKSVFDRDLAVQKKLDSMAERAMTTMYKEARVTDRRAKLVSSLHALLFSMLKKIDSEKLNVLFDQANSGVVPLATVPIVCSNKLTLVIPDPETWVKCVEGVHVTYSTVVWNIDCVTDADGTELHPTSTGSGLTYCISGDNIAWPLKVNLTRNGHNKVDVALQNNELMPHGVKTKACVAGVDQAHCSVESKCYYTSISGSSVVAAITSSNPNLKVASFLNEAGNQIYVDLDPPCKFGMKVGDKVEVVYLYFIKNTRSIVRGMVLGAISNVVVLQSKGHETEEVDAVGILSLCSFAVDPADTYCKYVAAGNQPLGNCVKMLTVHNGSGFAITSKPSPTPDQDSYGGASVCLYCRAHIAHPGGAGNLDGRCQFKGSFVQIPTTEKDPVGFCLRNKVCTVCQCWIGYGCQCDSLRQPKPSVQSVAVASGFDKNYLNRVRGSSEARLIPLANGCDPDVVKRAFDVCNKESAGMFQNLKRNCARFQEVRDTEDGNLEYCDSYFVVKQTTPSNYEHEKACYEDLKSEVTADHDFFVFNKNIYNISRQRLTKYTMMDFCYALRHFDPKDCEVLKEILVTYGCIEDYHPKWFEENKDWYDPIENPKYYAMLAKMGPIVRRALLNAIEFGNLMVEKGYVGVITLDNQDLNGKFYDFGDFQKTAPGAGVPVFDTYYSYMMPIIAMTDALAPERYFEYDVHKGYKSYDLLKYDYTEEKQDLFQKYFKYWDQEYHPNCRDCSDDRCLIHCANFNILFSTLVPQTSFGNLCRKVFVDGVPFIATCGYHSKELGVIMNQDNTMSFSKMGLSQLMQFVGDPALLVGTSNKLVDLRTSCFSVCALASGITHQTVKPGHFNKDFYDFAEKAGMFKEGSSIPLKHFFYPQTGNAAINDYDYYRYNRPTMFDIRQLLFCLEVTSKYFECYEGGCIPASQVVVNNLDKSAGYPFNKFGKARLYYEMSLEEQDQLFESTKKNVLPTITQMNLKYAISAKNRARTVAGVSILSTMTNRQFHQKILKSIVNTRNAPVVIGTTKFYGGWDNMLRNLIQGVEDPILMGWDYPKCDRAMPNLLRIAASLVLARKHTNCCTWSERVYRLYNECAQVLSETVLATGGIYVKPGGTSSGDATTAYANSVFNIIQATSANVARLLSVITRDIVYDDIKSLQYELYQQVYRRVNFDPAFVEKFYSYLCKNFSLMILSDDGVVCYNNTLAKQGLVADISGFREVLYYQNNVFMADSKCWVEPDLEKGPHEFCSQHTMLVEVDGEPRYLPYPDPSRILCACVFVDDLDKTESVAVMERYIALAIDAYPLVHHENEEYKKVFFVLLSYIRKLYQELSQNMLMDYSFVMDIDKGSKFWEQEFYENMYRAPTTLQSCGVCVVCNSQTILRCGNCIRKPFLCCKCCYDHVMHTDHKNVLSINPYICSQPGCGEADVTKLYLGGMSYFCGNHKPKLSIPLVSNGTVFGIYRANCAGSENVDDFNQLATTNWSTVEPYILANRCVDSLRRFAAETVKATEELHKQQFASAEVREVLSDRELILSWEPGKTRPPLNRNYVFTGFHFTRTSKVQLGDFTFEKGEGKDVVYYRATSTAKLSVGDIFVLTSHNVVSLIAPTLCPQQTFSRFVNLRPNVMVPACFVNNIPLYHLVGKQKRTTVQGPPGSGKSHFAIGLAAYFSNARVVFTACSHAAVDALCEKAFKFLKVDDCTRIVPQRTTIDCFSKFKANDTGKKYIFSTINALPEVSCDILLVDEVSMLTNYELSFINGKINYQYVVYVGDPAQLPAPRTLLNGSLSPKDYNVVTNLMVCVKPDIFLAKCYRCPKEIVDTVSTLVYDGKFIANNPESRQCFKVIVNNGNSDVGHESGSAYNITQLEFVKDFVCRNKEWREATFISPYNAMNQRAYRMLGLNVQTVDSSQGSEYDYVIFCVTADSQHALNINRFNVALTRAKRGILVVMRQRDELYSALKFIELDSVASLQGTGLFKICNKEFSGVHPAYAVTTKALAATYKVNDELAALVNVEAGSEITYKHLISLLGFKMSVNVEGCHNMFITRDEAIRNVRGWVGFDVEATHACGTNIGTNLPFQVGFSTGADFVVTPEGLVDTSIGNNFEPVNSKAPPGEQFNHLRALFKSAKPWHVVRPRIVQMLADNLCNVSDCVVFVTWCHGLELTTLRYFVKIGKDQVCSCGSRATTFNSHTQAYACWKHCLGFDFVYNPLLVDIQQWGYSGNLQFNHDLHCNVHGHAHVASADAIMTRCLAINNAFCQDVNWDLTYPHIANEDEVNSSCRYLQRMYLNACVDALKVNVVYDIGNPKGIKCVRRGDLNFRFYDKNPIVPNVKQFEYDYNQHKDKFADGLCMFWNCNVDCYPDNSLVCRYDTRNLSVFNLPGCNGGSLYVNKHAFHTPKFDRTSFRNLKAMPFFFYDSSPCETIQLDGVAQDLVSLATKDCITKCNIGGAVCKKHAQMYADFVTSYNAAVTAGFTFWVTNNFNPYNLWKSFSALQSIDNIAYNMYKGGHYDAIAGEMPTIVTGDKVFVIDQGVEKAVFFNQTILPTSVAFELYAKRNIRTLPNNRILKGLGVDVTNGFVIWDYTNQTPLYRNTVKVCAYTDIEPNGLIVLYDDRYGDYQSFLAADNAVLVSTQCYKRYSYVEIPSNLLVQNGIPLKDGANLYVYKRVNGAFVTLPNTLNTQGRSYETFEPRSDVERDFLDMSEESFVEKYGKELGLQHILYGEVDKPQLGGLHTVIGMCRLLRANKLNAKSVTNSDSDVMQNYFVLADNGSYKQVCTVVDLLLDDFLELLRNILKEYGTNKSKVVTVSIDYHSINFMAWFEDGIIKTCYPQLQSAWTCGYNMPELYKVQNCVMEPCNIPNYGVGIALPSGIMMNVAKYTQLCQYLSKTTMCVPHNMRVMHFGAGSDKGVAPGSTVLKQWLPEGTLLVDNDIVDYVSDAHVSVLSDCNKYKTEHKFDLVISDMYTDNDSKRKHEGVIANNGNDDVFIYLSSFLRNNLALGGSFAVKVTETSWHEVLYDIAQDCAWWTMFCTAVNASSSEAFLVGVNYLGASEKVKVSGKTLHANYIFWRNCNYLQTSAYSIFDVAKFDLRLKATPVVNLKTEQKTDLVFNLIKCGKLLVRDVGNTSFTSDSFVCTM</sequence>
<evidence type="ECO:0000250" key="1"/>
<evidence type="ECO:0000250" key="2">
    <source>
        <dbReference type="UniProtKB" id="P0C6X7"/>
    </source>
</evidence>
<evidence type="ECO:0000250" key="3">
    <source>
        <dbReference type="UniProtKB" id="P0C6Y1"/>
    </source>
</evidence>
<evidence type="ECO:0000250" key="4">
    <source>
        <dbReference type="UniProtKB" id="P0DTD1"/>
    </source>
</evidence>
<evidence type="ECO:0000255" key="5"/>
<evidence type="ECO:0000255" key="6">
    <source>
        <dbReference type="PROSITE-ProRule" id="PRU00214"/>
    </source>
</evidence>
<evidence type="ECO:0000255" key="7">
    <source>
        <dbReference type="PROSITE-ProRule" id="PRU00444"/>
    </source>
</evidence>
<evidence type="ECO:0000255" key="8">
    <source>
        <dbReference type="PROSITE-ProRule" id="PRU00490"/>
    </source>
</evidence>
<evidence type="ECO:0000255" key="9">
    <source>
        <dbReference type="PROSITE-ProRule" id="PRU00539"/>
    </source>
</evidence>
<evidence type="ECO:0000255" key="10">
    <source>
        <dbReference type="PROSITE-ProRule" id="PRU00772"/>
    </source>
</evidence>
<evidence type="ECO:0000255" key="11">
    <source>
        <dbReference type="PROSITE-ProRule" id="PRU00986"/>
    </source>
</evidence>
<evidence type="ECO:0000255" key="12">
    <source>
        <dbReference type="PROSITE-ProRule" id="PRU01291"/>
    </source>
</evidence>
<evidence type="ECO:0000255" key="13">
    <source>
        <dbReference type="PROSITE-ProRule" id="PRU01292"/>
    </source>
</evidence>
<evidence type="ECO:0000255" key="14">
    <source>
        <dbReference type="PROSITE-ProRule" id="PRU01293"/>
    </source>
</evidence>
<evidence type="ECO:0000255" key="15">
    <source>
        <dbReference type="PROSITE-ProRule" id="PRU01294"/>
    </source>
</evidence>
<evidence type="ECO:0000255" key="16">
    <source>
        <dbReference type="PROSITE-ProRule" id="PRU01295"/>
    </source>
</evidence>
<evidence type="ECO:0000255" key="17">
    <source>
        <dbReference type="PROSITE-ProRule" id="PRU01296"/>
    </source>
</evidence>
<evidence type="ECO:0000255" key="18">
    <source>
        <dbReference type="PROSITE-ProRule" id="PRU01297"/>
    </source>
</evidence>
<evidence type="ECO:0000255" key="19">
    <source>
        <dbReference type="PROSITE-ProRule" id="PRU01298"/>
    </source>
</evidence>
<evidence type="ECO:0000255" key="20">
    <source>
        <dbReference type="PROSITE-ProRule" id="PRU01299"/>
    </source>
</evidence>
<evidence type="ECO:0000255" key="21">
    <source>
        <dbReference type="PROSITE-ProRule" id="PRU01300"/>
    </source>
</evidence>
<evidence type="ECO:0000255" key="22">
    <source>
        <dbReference type="PROSITE-ProRule" id="PRU01303"/>
    </source>
</evidence>
<evidence type="ECO:0000255" key="23">
    <source>
        <dbReference type="PROSITE-ProRule" id="PRU01305"/>
    </source>
</evidence>
<evidence type="ECO:0000255" key="24">
    <source>
        <dbReference type="PROSITE-ProRule" id="PRU01306"/>
    </source>
</evidence>
<evidence type="ECO:0000255" key="25">
    <source>
        <dbReference type="PROSITE-ProRule" id="PRU01336"/>
    </source>
</evidence>
<evidence type="ECO:0000255" key="26">
    <source>
        <dbReference type="PROSITE-ProRule" id="PRU01337"/>
    </source>
</evidence>
<evidence type="ECO:0000255" key="27">
    <source>
        <dbReference type="PROSITE-ProRule" id="PRU01344"/>
    </source>
</evidence>
<evidence type="ECO:0000269" key="28">
    <source>
    </source>
</evidence>
<evidence type="ECO:0000269" key="29">
    <source>
    </source>
</evidence>
<evidence type="ECO:0000269" key="30">
    <source>
    </source>
</evidence>
<evidence type="ECO:0000305" key="31"/>
<evidence type="ECO:0000305" key="32">
    <source>
    </source>
</evidence>
<evidence type="ECO:0007744" key="33">
    <source>
        <dbReference type="PDB" id="2Q6D"/>
    </source>
</evidence>
<evidence type="ECO:0007744" key="34">
    <source>
        <dbReference type="PDB" id="5C94"/>
    </source>
</evidence>
<evidence type="ECO:0007829" key="35">
    <source>
        <dbReference type="PDB" id="2Q6D"/>
    </source>
</evidence>
<evidence type="ECO:0007829" key="36">
    <source>
        <dbReference type="PDB" id="5C94"/>
    </source>
</evidence>
<evidence type="ECO:0007829" key="37">
    <source>
        <dbReference type="PDB" id="7F52"/>
    </source>
</evidence>
<protein>
    <recommendedName>
        <fullName>Replicase polyprotein 1ab</fullName>
        <shortName>pp1ab</shortName>
    </recommendedName>
    <alternativeName>
        <fullName>ORF1ab polyprotein</fullName>
    </alternativeName>
    <component>
        <recommendedName>
            <fullName>Non-structural protein 2</fullName>
            <shortName>nsp2</shortName>
        </recommendedName>
        <alternativeName>
            <fullName>p87</fullName>
        </alternativeName>
    </component>
    <component>
        <recommendedName>
            <fullName>Papain-like protease</fullName>
            <shortName>PL-PRO</shortName>
            <ecNumber evidence="2">3.4.19.12</ecNumber>
            <ecNumber evidence="2">3.4.22.-</ecNumber>
        </recommendedName>
        <alternativeName>
            <fullName>Non-structural protein 3</fullName>
            <shortName>nsp3</shortName>
        </alternativeName>
        <alternativeName>
            <fullName>p195</fullName>
        </alternativeName>
    </component>
    <component>
        <recommendedName>
            <fullName>Non-structural protein 4</fullName>
            <shortName>nsp4</shortName>
        </recommendedName>
        <alternativeName>
            <fullName>Peptide HD2</fullName>
        </alternativeName>
        <alternativeName>
            <fullName>p41</fullName>
        </alternativeName>
    </component>
    <component>
        <recommendedName>
            <fullName>3C-like proteinase</fullName>
            <shortName>3CL-PRO</shortName>
            <shortName>3CLp</shortName>
            <ecNumber evidence="2">3.4.22.-</ecNumber>
        </recommendedName>
        <alternativeName>
            <fullName>Main protease</fullName>
            <shortName>Mpro</shortName>
        </alternativeName>
        <alternativeName>
            <fullName>Non-structural protein 5</fullName>
            <shortName>nsp5</shortName>
        </alternativeName>
        <alternativeName>
            <fullName>p33</fullName>
        </alternativeName>
    </component>
    <component>
        <recommendedName>
            <fullName>Non-structural protein 6</fullName>
            <shortName>nsp6</shortName>
        </recommendedName>
        <alternativeName>
            <fullName>p34</fullName>
        </alternativeName>
    </component>
    <component>
        <recommendedName>
            <fullName>Non-structural protein 7</fullName>
            <shortName>nsp7</shortName>
        </recommendedName>
        <alternativeName>
            <fullName>p9</fullName>
        </alternativeName>
    </component>
    <component>
        <recommendedName>
            <fullName>Non-structural protein 8</fullName>
            <shortName>nsp8</shortName>
        </recommendedName>
        <alternativeName>
            <fullName>p24</fullName>
        </alternativeName>
    </component>
    <component>
        <recommendedName>
            <fullName>Viral protein genome-linked nsp9</fullName>
        </recommendedName>
        <alternativeName>
            <fullName>Non-structural protein 9</fullName>
            <shortName>nsp9</shortName>
        </alternativeName>
        <alternativeName>
            <fullName>RNA-capping enzyme subunit nsp9</fullName>
        </alternativeName>
        <alternativeName>
            <fullName>p10</fullName>
        </alternativeName>
    </component>
    <component>
        <recommendedName>
            <fullName>Non-structural protein 10</fullName>
            <shortName>nsp10</shortName>
        </recommendedName>
        <alternativeName>
            <fullName>Growth factor-like peptide</fullName>
            <shortName>GFL</shortName>
        </alternativeName>
        <alternativeName>
            <fullName>p16</fullName>
        </alternativeName>
    </component>
    <component>
        <recommendedName>
            <fullName>RNA-directed RNA polymerase nsp12</fullName>
            <shortName>Pol</shortName>
            <shortName>RdRp</shortName>
            <ecNumber>2.7.7.48</ecNumber>
            <ecNumber>2.7.7.50</ecNumber>
        </recommendedName>
        <alternativeName>
            <fullName>nsp12</fullName>
        </alternativeName>
        <alternativeName>
            <fullName>p100</fullName>
        </alternativeName>
    </component>
    <component>
        <recommendedName>
            <fullName>Helicase</fullName>
            <shortName>Hel</shortName>
            <ecNumber evidence="2">3.6.4.12</ecNumber>
            <ecNumber evidence="2">3.6.4.13</ecNumber>
        </recommendedName>
        <alternativeName>
            <fullName>nsp13</fullName>
        </alternativeName>
        <alternativeName>
            <fullName>p68</fullName>
        </alternativeName>
    </component>
    <component>
        <recommendedName>
            <fullName evidence="2">Proofreading exoribonuclease</fullName>
            <shortName>ExoN</shortName>
            <ecNumber>2.1.1.-</ecNumber>
            <ecNumber>3.1.13.-</ecNumber>
        </recommendedName>
        <alternativeName>
            <fullName evidence="2">Guanine-N7 methyltransferase</fullName>
        </alternativeName>
        <alternativeName>
            <fullName>Non-structural protein 14</fullName>
            <shortName>nsp14</shortName>
        </alternativeName>
        <alternativeName>
            <fullName>p58</fullName>
        </alternativeName>
    </component>
    <component>
        <recommendedName>
            <fullName>Uridylate-specific endoribonuclease</fullName>
            <ecNumber evidence="2">4.6.1.-</ecNumber>
        </recommendedName>
        <alternativeName>
            <fullName>NendoU</fullName>
        </alternativeName>
        <alternativeName>
            <fullName>Non-structural protein 15</fullName>
            <shortName>nsp15</shortName>
        </alternativeName>
        <alternativeName>
            <fullName>p39</fullName>
        </alternativeName>
    </component>
    <component>
        <recommendedName>
            <fullName>2'-O-methyl transferase</fullName>
            <ecNumber>2.1.1.57</ecNumber>
        </recommendedName>
        <alternativeName>
            <fullName>Non-structural protein 16</fullName>
            <shortName>nsp16</shortName>
        </alternativeName>
        <alternativeName>
            <fullName>p35</fullName>
        </alternativeName>
    </component>
</protein>
<accession>P0C6Y3</accession>
<accession>Q0GNB9</accession>
<accession>Q0GNC0</accession>
<accession>Q5I5Y0</accession>
<accession>Q5I5Y1</accession>
<reference key="1">
    <citation type="submission" date="2006-06" db="EMBL/GenBank/DDBJ databases">
        <title>Avian infectious bronchitis virus strain M41.</title>
        <authorList>
            <person name="Mondal S.P."/>
            <person name="Buckles E.L."/>
        </authorList>
    </citation>
    <scope>NUCLEOTIDE SEQUENCE [GENOMIC RNA]</scope>
</reference>
<reference key="2">
    <citation type="journal article" date="2006" name="J. Virol. Methods">
        <title>Development and evaluation of a real-time Taqman RT-PCR assay for the detection of infectious bronchitis virus from infected chickens.</title>
        <authorList>
            <person name="Callison S.A."/>
            <person name="Hilt D.A."/>
            <person name="Boynton T.O."/>
            <person name="Sample B.F."/>
            <person name="Robison R."/>
            <person name="Swayne D.E."/>
            <person name="Jackwood M.W."/>
        </authorList>
    </citation>
    <scope>NUCLEOTIDE SEQUENCE [GENOMIC RNA]</scope>
</reference>
<reference key="3">
    <citation type="journal article" date="2018" name="Viruses">
        <title>Infectious Bronchitis Virus Nonstructural Protein 4 Alone Induces Membrane Pairing.</title>
        <authorList>
            <person name="Doyle N."/>
            <person name="Neuman B.W."/>
            <person name="Simpson J."/>
            <person name="Hawes P.C."/>
            <person name="Mantell J."/>
            <person name="Verkade P."/>
            <person name="Alrashedi H."/>
            <person name="Maier H.J."/>
        </authorList>
    </citation>
    <scope>SUBCELLULAR LOCATION (PAPAIN-LIKE PROTEASE)</scope>
    <scope>SUBCELLULAR LOCATION (NON-STRUCTURAL PROTEIN 4)</scope>
    <scope>SUBCELLULAR LOCATION (NON-STRUCTURAL PROTEIN 6)</scope>
</reference>
<reference evidence="33" key="4">
    <citation type="journal article" date="2008" name="J. Virol.">
        <title>Structures of two coronavirus main proteases: implications for substrate binding and antiviral drug design.</title>
        <authorList>
            <person name="Xue X."/>
            <person name="Yu H."/>
            <person name="Yang H."/>
            <person name="Xue F."/>
            <person name="Wu Z."/>
            <person name="Shen W."/>
            <person name="Li J."/>
            <person name="Zhou Z."/>
            <person name="Ding Y."/>
            <person name="Zhao Q."/>
            <person name="Zhang X.C."/>
            <person name="Liao M."/>
            <person name="Bartlam M."/>
            <person name="Rao Z."/>
        </authorList>
    </citation>
    <scope>X-RAY CRYSTALLOGRAPHY (2.35 ANGSTROMS) OF 2782-3088</scope>
    <scope>SUBUNIT (3C-LIKE PROTEINASE)</scope>
</reference>
<reference evidence="34" key="5">
    <citation type="journal article" date="2017" name="Protein Sci.">
        <title>Structural basis for dimerization and RNA binding of avian infectious bronchitis virus nsp9.</title>
        <authorList>
            <person name="Hu T."/>
            <person name="Chen C."/>
            <person name="Li H."/>
            <person name="Dou Y."/>
            <person name="Zhou M."/>
            <person name="Lu D."/>
            <person name="Zong Q."/>
            <person name="Li Y."/>
            <person name="Yang C."/>
            <person name="Zhong Z."/>
            <person name="Singh N."/>
            <person name="Hu H."/>
            <person name="Zhang R."/>
            <person name="Yang H."/>
            <person name="Su D."/>
        </authorList>
    </citation>
    <scope>X-RAY CRYSTALLOGRAPHY (2.44 ANGSTROMS) OF 3675-3785</scope>
    <scope>SUBUNIT (NON-STRUCTURAL PROTEIN 9)</scope>
    <scope>MUTAGENESIS OF PHE-3747; ILE-3769 AND GLY-3772</scope>
    <scope>FUNCTION (NON-STRUCTURAL PROTEIN 9)</scope>
</reference>
<keyword id="KW-0002">3D-structure</keyword>
<keyword id="KW-1072">Activation of host autophagy by virus</keyword>
<keyword id="KW-0067">ATP-binding</keyword>
<keyword id="KW-1015">Disulfide bond</keyword>
<keyword id="KW-0255">Endonuclease</keyword>
<keyword id="KW-0269">Exonuclease</keyword>
<keyword id="KW-0347">Helicase</keyword>
<keyword id="KW-1035">Host cytoplasm</keyword>
<keyword id="KW-1038">Host endoplasmic reticulum</keyword>
<keyword id="KW-1043">Host membrane</keyword>
<keyword id="KW-0945">Host-virus interaction</keyword>
<keyword id="KW-0378">Hydrolase</keyword>
<keyword id="KW-0456">Lyase</keyword>
<keyword id="KW-0472">Membrane</keyword>
<keyword id="KW-0479">Metal-binding</keyword>
<keyword id="KW-0489">Methyltransferase</keyword>
<keyword id="KW-0540">Nuclease</keyword>
<keyword id="KW-0547">Nucleotide-binding</keyword>
<keyword id="KW-0548">Nucleotidyltransferase</keyword>
<keyword id="KW-0645">Protease</keyword>
<keyword id="KW-0677">Repeat</keyword>
<keyword id="KW-0688">Ribosomal frameshifting</keyword>
<keyword id="KW-0694">RNA-binding</keyword>
<keyword id="KW-0696">RNA-directed RNA polymerase</keyword>
<keyword id="KW-0788">Thiol protease</keyword>
<keyword id="KW-0808">Transferase</keyword>
<keyword id="KW-0812">Transmembrane</keyword>
<keyword id="KW-1133">Transmembrane helix</keyword>
<keyword id="KW-0693">Viral RNA replication</keyword>
<keyword id="KW-0862">Zinc</keyword>
<keyword id="KW-0863">Zinc-finger</keyword>
<proteinExistence type="evidence at protein level"/>
<organism>
    <name type="scientific">Avian infectious bronchitis virus (strain M41)</name>
    <name type="common">IBV</name>
    <dbReference type="NCBI Taxonomy" id="11127"/>
    <lineage>
        <taxon>Viruses</taxon>
        <taxon>Riboviria</taxon>
        <taxon>Orthornavirae</taxon>
        <taxon>Pisuviricota</taxon>
        <taxon>Pisoniviricetes</taxon>
        <taxon>Nidovirales</taxon>
        <taxon>Cornidovirineae</taxon>
        <taxon>Coronaviridae</taxon>
        <taxon>Orthocoronavirinae</taxon>
        <taxon>Gammacoronavirus</taxon>
        <taxon>Igacovirus</taxon>
        <taxon>Avian coronavirus</taxon>
    </lineage>
</organism>